<protein>
    <recommendedName>
        <fullName evidence="59">Natriuretic peptides A</fullName>
    </recommendedName>
    <alternativeName>
        <fullName evidence="53">Atrial natriuretic factor prohormone</fullName>
        <shortName evidence="53">proANF</shortName>
    </alternativeName>
    <alternativeName>
        <fullName evidence="47">Atrial natriuretic peptide prohormone</fullName>
        <shortName evidence="47">preproANP</shortName>
        <shortName evidence="59">proANP</shortName>
    </alternativeName>
    <alternativeName>
        <fullName evidence="50">Atriopeptigen</fullName>
    </alternativeName>
    <alternativeName>
        <fullName evidence="54">Cardiodilatin</fullName>
        <shortName evidence="54">CDD</shortName>
    </alternativeName>
    <alternativeName>
        <fullName evidence="54">preproCDD-ANF</fullName>
    </alternativeName>
    <component>
        <recommendedName>
            <fullName evidence="57">Long-acting natriuretic peptide</fullName>
            <shortName evidence="57">LANP</shortName>
        </recommendedName>
        <alternativeName>
            <fullName evidence="59">Long-acting natriuretic hormone</fullName>
            <shortName evidence="59">LANH</shortName>
        </alternativeName>
        <alternativeName>
            <fullName evidence="46">Pro atrial natriuretic factor 1-30</fullName>
            <shortName evidence="46">proANF 1-30</shortName>
        </alternativeName>
        <alternativeName>
            <fullName evidence="59">Pro atrial natriuretic peptide 1-30</fullName>
            <shortName evidence="59">proANP 1-30</shortName>
        </alternativeName>
    </component>
    <component>
        <recommendedName>
            <fullName evidence="57">Vessel dilator</fullName>
            <shortName evidence="57">VSDL</shortName>
        </recommendedName>
        <alternativeName>
            <fullName evidence="46">Pro atrial natriuretic factor 31-67</fullName>
            <shortName evidence="46">proANF 31-67</shortName>
        </alternativeName>
        <alternativeName>
            <fullName evidence="59">Pro atrial natriuretic peptide 31-67</fullName>
            <shortName evidence="59">proANP 31-67</shortName>
        </alternativeName>
    </component>
    <component>
        <recommendedName>
            <fullName evidence="57">Kaliuretic peptide</fullName>
            <shortName evidence="57">KP</shortName>
        </recommendedName>
        <alternativeName>
            <fullName evidence="55">Pro atrial natriuretic factor 79-98</fullName>
            <shortName evidence="55">proANF 79-98</shortName>
        </alternativeName>
        <alternativeName>
            <fullName evidence="59">Pro atrial natriuretic peptide 79-98</fullName>
            <shortName evidence="59">proANP 79-98</shortName>
        </alternativeName>
    </component>
    <component>
        <recommendedName>
            <fullName evidence="49">Urodilatin</fullName>
            <shortName evidence="58">URO</shortName>
        </recommendedName>
        <alternativeName>
            <fullName evidence="49">CDD 95-126</fullName>
        </alternativeName>
        <alternativeName>
            <fullName evidence="56">CDD-ANP (95-126)</fullName>
        </alternativeName>
        <alternativeName>
            <fullName evidence="48">Pro atrial natriuretic peptide 95-126</fullName>
            <shortName evidence="48">proANP 95-126</shortName>
        </alternativeName>
    </component>
    <component>
        <recommendedName>
            <fullName evidence="59">Auriculin-C</fullName>
        </recommendedName>
        <alternativeName>
            <fullName evidence="1">Atrial natriuretic factor 1-33</fullName>
            <shortName evidence="1">ANF 1-33</shortName>
        </alternativeName>
    </component>
    <component>
        <recommendedName>
            <fullName evidence="59">Auriculin-D</fullName>
        </recommendedName>
        <alternativeName>
            <fullName evidence="1">Atrial natriuretic factor 3-33</fullName>
            <shortName evidence="1">ANF 3-33</shortName>
        </alternativeName>
    </component>
    <component>
        <recommendedName>
            <fullName evidence="52">Atrial natriuretic peptide</fullName>
            <shortName evidence="52">ANP</shortName>
        </recommendedName>
        <alternativeName>
            <fullName evidence="51">Alpha-atrial natriuretic peptide</fullName>
        </alternativeName>
        <alternativeName>
            <fullName evidence="51">Alpha-hANP</fullName>
        </alternativeName>
        <alternativeName>
            <fullName evidence="46">Atrial natriuretic factor</fullName>
            <shortName evidence="46">ANF</shortName>
        </alternativeName>
        <alternativeName>
            <fullName evidence="52">CDD-ANF</fullName>
        </alternativeName>
        <alternativeName>
            <fullName evidence="58">CDD-ANP (99-126)</fullName>
        </alternativeName>
        <alternativeName>
            <fullName evidence="1">Cardionatrin</fullName>
        </alternativeName>
        <alternativeName>
            <fullName evidence="46">Pro atrial natriuretic factor 99-126</fullName>
            <shortName evidence="46">proANF 99-126</shortName>
        </alternativeName>
    </component>
    <component>
        <recommendedName>
            <fullName evidence="59">Auriculin-B</fullName>
        </recommendedName>
        <alternativeName>
            <fullName evidence="1">Atrial natriuretic factor 8-33</fullName>
            <shortName evidence="1">ANF 8-33</shortName>
        </alternativeName>
    </component>
    <component>
        <recommendedName>
            <fullName evidence="1">Auriculin-A</fullName>
        </recommendedName>
    </component>
    <component>
        <recommendedName>
            <fullName evidence="1">Atriopeptin-1</fullName>
        </recommendedName>
        <alternativeName>
            <fullName evidence="1">Atriopeptin I</fullName>
        </alternativeName>
    </component>
    <component>
        <recommendedName>
            <fullName evidence="1">Atriopeptin-2</fullName>
        </recommendedName>
        <alternativeName>
            <fullName evidence="1">Atriopeptin II</fullName>
        </alternativeName>
    </component>
    <component>
        <recommendedName>
            <fullName evidence="1">Atriopeptin-3</fullName>
        </recommendedName>
        <alternativeName>
            <fullName evidence="1">Atriopeptin III</fullName>
        </alternativeName>
    </component>
</protein>
<dbReference type="EMBL" id="K02043">
    <property type="protein sequence ID" value="AAB59379.1"/>
    <property type="molecule type" value="Genomic_DNA"/>
</dbReference>
<dbReference type="EMBL" id="M30262">
    <property type="protein sequence ID" value="AAA35669.1"/>
    <property type="molecule type" value="mRNA"/>
</dbReference>
<dbReference type="EMBL" id="X01470">
    <property type="protein sequence ID" value="CAA25699.1"/>
    <property type="molecule type" value="Genomic_DNA"/>
</dbReference>
<dbReference type="EMBL" id="X02558">
    <property type="protein sequence ID" value="CAA25699.1"/>
    <property type="status" value="JOINED"/>
    <property type="molecule type" value="Genomic_DNA"/>
</dbReference>
<dbReference type="EMBL" id="X01471">
    <property type="protein sequence ID" value="CAA25700.2"/>
    <property type="molecule type" value="Genomic_DNA"/>
</dbReference>
<dbReference type="EMBL" id="M54951">
    <property type="protein sequence ID" value="AAA35529.1"/>
    <property type="molecule type" value="Genomic_DNA"/>
</dbReference>
<dbReference type="EMBL" id="M54947">
    <property type="protein sequence ID" value="AAA35529.1"/>
    <property type="status" value="JOINED"/>
    <property type="molecule type" value="Genomic_DNA"/>
</dbReference>
<dbReference type="EMBL" id="AL021155">
    <property type="status" value="NOT_ANNOTATED_CDS"/>
    <property type="molecule type" value="Genomic_DNA"/>
</dbReference>
<dbReference type="EMBL" id="EU326308">
    <property type="protein sequence ID" value="ACA05916.1"/>
    <property type="molecule type" value="Genomic_DNA"/>
</dbReference>
<dbReference type="EMBL" id="BC005893">
    <property type="protein sequence ID" value="AAH05893.1"/>
    <property type="molecule type" value="mRNA"/>
</dbReference>
<dbReference type="EMBL" id="K02399">
    <property type="protein sequence ID" value="AAA35528.1"/>
    <property type="molecule type" value="Genomic_DNA"/>
</dbReference>
<dbReference type="EMBL" id="K02044">
    <property type="protein sequence ID" value="AAA51730.1"/>
    <property type="molecule type" value="mRNA"/>
</dbReference>
<dbReference type="CCDS" id="CCDS139.1"/>
<dbReference type="PIR" id="A22693">
    <property type="entry name" value="AWHU"/>
</dbReference>
<dbReference type="RefSeq" id="NP_006163.1">
    <property type="nucleotide sequence ID" value="NM_006172.4"/>
</dbReference>
<dbReference type="PDB" id="1ANP">
    <property type="method" value="NMR"/>
    <property type="chains" value="A=124-151"/>
</dbReference>
<dbReference type="PDB" id="1YK0">
    <property type="method" value="X-ray"/>
    <property type="resolution" value="2.40 A"/>
    <property type="chains" value="E=129-149"/>
</dbReference>
<dbReference type="PDB" id="3N57">
    <property type="method" value="X-ray"/>
    <property type="resolution" value="3.03 A"/>
    <property type="chains" value="C/D=124-151"/>
</dbReference>
<dbReference type="PDB" id="7BRH">
    <property type="method" value="X-ray"/>
    <property type="resolution" value="2.45 A"/>
    <property type="chains" value="L=124-151"/>
</dbReference>
<dbReference type="PDB" id="7BRJ">
    <property type="method" value="X-ray"/>
    <property type="resolution" value="2.70 A"/>
    <property type="chains" value="L=130-151"/>
</dbReference>
<dbReference type="PDB" id="7BRK">
    <property type="method" value="X-ray"/>
    <property type="resolution" value="2.85 A"/>
    <property type="chains" value="L=128-150"/>
</dbReference>
<dbReference type="PDB" id="8TG9">
    <property type="method" value="EM"/>
    <property type="resolution" value="3.08 A"/>
    <property type="chains" value="C=124-151"/>
</dbReference>
<dbReference type="PDB" id="9BCQ">
    <property type="method" value="EM"/>
    <property type="resolution" value="3.10 A"/>
    <property type="chains" value="C=124-151"/>
</dbReference>
<dbReference type="PDBsum" id="1ANP"/>
<dbReference type="PDBsum" id="1YK0"/>
<dbReference type="PDBsum" id="3N57"/>
<dbReference type="PDBsum" id="7BRH"/>
<dbReference type="PDBsum" id="7BRJ"/>
<dbReference type="PDBsum" id="7BRK"/>
<dbReference type="PDBsum" id="8TG9"/>
<dbReference type="PDBsum" id="9BCQ"/>
<dbReference type="EMDB" id="EMD-41233"/>
<dbReference type="EMDB" id="EMD-44434"/>
<dbReference type="SMR" id="P01160"/>
<dbReference type="BioGRID" id="110938">
    <property type="interactions" value="57"/>
</dbReference>
<dbReference type="FunCoup" id="P01160">
    <property type="interactions" value="553"/>
</dbReference>
<dbReference type="IntAct" id="P01160">
    <property type="interactions" value="47"/>
</dbReference>
<dbReference type="STRING" id="9606.ENSP00000365663"/>
<dbReference type="BindingDB" id="P01160"/>
<dbReference type="ChEMBL" id="CHEMBL1293193"/>
<dbReference type="TCDB" id="1.C.46.2.3">
    <property type="family name" value="the c-type natriuretic peptide (cnp) family"/>
</dbReference>
<dbReference type="CarbonylDB" id="P01160"/>
<dbReference type="GlyCosmos" id="P01160">
    <property type="glycosylation" value="1 site, 1 glycan"/>
</dbReference>
<dbReference type="GlyGen" id="P01160">
    <property type="glycosylation" value="1 site, 1 O-linked glycan (1 site)"/>
</dbReference>
<dbReference type="iPTMnet" id="P01160"/>
<dbReference type="PhosphoSitePlus" id="P01160"/>
<dbReference type="BioMuta" id="NPPA"/>
<dbReference type="DMDM" id="113864"/>
<dbReference type="MassIVE" id="P01160"/>
<dbReference type="PaxDb" id="9606-ENSP00000365663"/>
<dbReference type="PeptideAtlas" id="P01160"/>
<dbReference type="ProteomicsDB" id="51340"/>
<dbReference type="Antibodypedia" id="13911">
    <property type="antibodies" value="755 antibodies from 40 providers"/>
</dbReference>
<dbReference type="DNASU" id="4878"/>
<dbReference type="Ensembl" id="ENST00000376480.7">
    <property type="protein sequence ID" value="ENSP00000365663.3"/>
    <property type="gene ID" value="ENSG00000175206.11"/>
</dbReference>
<dbReference type="GeneID" id="4878"/>
<dbReference type="KEGG" id="hsa:4878"/>
<dbReference type="MANE-Select" id="ENST00000376480.7">
    <property type="protein sequence ID" value="ENSP00000365663.3"/>
    <property type="RefSeq nucleotide sequence ID" value="NM_006172.4"/>
    <property type="RefSeq protein sequence ID" value="NP_006163.1"/>
</dbReference>
<dbReference type="UCSC" id="uc001ati.4">
    <property type="organism name" value="human"/>
</dbReference>
<dbReference type="AGR" id="HGNC:7939"/>
<dbReference type="CTD" id="4878"/>
<dbReference type="DisGeNET" id="4878"/>
<dbReference type="GeneCards" id="NPPA"/>
<dbReference type="HGNC" id="HGNC:7939">
    <property type="gene designation" value="NPPA"/>
</dbReference>
<dbReference type="HPA" id="ENSG00000175206">
    <property type="expression patterns" value="Tissue enriched (heart)"/>
</dbReference>
<dbReference type="MalaCards" id="NPPA"/>
<dbReference type="MIM" id="108780">
    <property type="type" value="gene"/>
</dbReference>
<dbReference type="MIM" id="612201">
    <property type="type" value="phenotype"/>
</dbReference>
<dbReference type="MIM" id="615745">
    <property type="type" value="phenotype"/>
</dbReference>
<dbReference type="neXtProt" id="NX_P01160"/>
<dbReference type="OpenTargets" id="ENSG00000175206"/>
<dbReference type="Orphanet" id="1344">
    <property type="disease" value="Atrial standstill"/>
</dbReference>
<dbReference type="Orphanet" id="334">
    <property type="disease" value="Familial atrial fibrillation"/>
</dbReference>
<dbReference type="PharmGKB" id="PA256"/>
<dbReference type="VEuPathDB" id="HostDB:ENSG00000175206"/>
<dbReference type="eggNOG" id="ENOG502S9RQ">
    <property type="taxonomic scope" value="Eukaryota"/>
</dbReference>
<dbReference type="GeneTree" id="ENSGT00940000154513"/>
<dbReference type="InParanoid" id="P01160"/>
<dbReference type="OMA" id="GPWDASD"/>
<dbReference type="OrthoDB" id="8865096at2759"/>
<dbReference type="PAN-GO" id="P01160">
    <property type="GO annotations" value="10 GO annotations based on evolutionary models"/>
</dbReference>
<dbReference type="PhylomeDB" id="P01160"/>
<dbReference type="TreeFam" id="TF106304"/>
<dbReference type="PathwayCommons" id="P01160"/>
<dbReference type="Reactome" id="R-HSA-2032785">
    <property type="pathway name" value="YAP1- and WWTR1 (TAZ)-stimulated gene expression"/>
</dbReference>
<dbReference type="Reactome" id="R-HSA-5578768">
    <property type="pathway name" value="Physiological factors"/>
</dbReference>
<dbReference type="Reactome" id="R-HSA-977225">
    <property type="pathway name" value="Amyloid fiber formation"/>
</dbReference>
<dbReference type="SignaLink" id="P01160"/>
<dbReference type="SIGNOR" id="P01160"/>
<dbReference type="BioGRID-ORCS" id="4878">
    <property type="hits" value="12 hits in 1138 CRISPR screens"/>
</dbReference>
<dbReference type="EvolutionaryTrace" id="P01160"/>
<dbReference type="GeneWiki" id="Atrial_natriuretic_peptide"/>
<dbReference type="GenomeRNAi" id="4878"/>
<dbReference type="Pharos" id="P01160">
    <property type="development level" value="Tchem"/>
</dbReference>
<dbReference type="PRO" id="PR:P01160"/>
<dbReference type="Proteomes" id="UP000005640">
    <property type="component" value="Chromosome 1"/>
</dbReference>
<dbReference type="RNAct" id="P01160">
    <property type="molecule type" value="protein"/>
</dbReference>
<dbReference type="Bgee" id="ENSG00000175206">
    <property type="expression patterns" value="Expressed in cardiac muscle of right atrium and 149 other cell types or tissues"/>
</dbReference>
<dbReference type="ExpressionAtlas" id="P01160">
    <property type="expression patterns" value="baseline and differential"/>
</dbReference>
<dbReference type="GO" id="GO:0005903">
    <property type="term" value="C:brush border"/>
    <property type="evidence" value="ECO:0007669"/>
    <property type="project" value="Ensembl"/>
</dbReference>
<dbReference type="GO" id="GO:0042995">
    <property type="term" value="C:cell projection"/>
    <property type="evidence" value="ECO:0007669"/>
    <property type="project" value="UniProtKB-SubCell"/>
</dbReference>
<dbReference type="GO" id="GO:0062023">
    <property type="term" value="C:collagen-containing extracellular matrix"/>
    <property type="evidence" value="ECO:0007005"/>
    <property type="project" value="BHF-UCL"/>
</dbReference>
<dbReference type="GO" id="GO:0005737">
    <property type="term" value="C:cytoplasm"/>
    <property type="evidence" value="ECO:0000318"/>
    <property type="project" value="GO_Central"/>
</dbReference>
<dbReference type="GO" id="GO:0005576">
    <property type="term" value="C:extracellular region"/>
    <property type="evidence" value="ECO:0000304"/>
    <property type="project" value="Reactome"/>
</dbReference>
<dbReference type="GO" id="GO:0005615">
    <property type="term" value="C:extracellular space"/>
    <property type="evidence" value="ECO:0000318"/>
    <property type="project" value="GO_Central"/>
</dbReference>
<dbReference type="GO" id="GO:0098690">
    <property type="term" value="C:glycinergic synapse"/>
    <property type="evidence" value="ECO:0007669"/>
    <property type="project" value="Ensembl"/>
</dbReference>
<dbReference type="GO" id="GO:0042629">
    <property type="term" value="C:mast cell granule"/>
    <property type="evidence" value="ECO:0007669"/>
    <property type="project" value="Ensembl"/>
</dbReference>
<dbReference type="GO" id="GO:0043204">
    <property type="term" value="C:perikaryon"/>
    <property type="evidence" value="ECO:0007669"/>
    <property type="project" value="UniProtKB-SubCell"/>
</dbReference>
<dbReference type="GO" id="GO:0048471">
    <property type="term" value="C:perinuclear region of cytoplasm"/>
    <property type="evidence" value="ECO:0007669"/>
    <property type="project" value="Ensembl"/>
</dbReference>
<dbReference type="GO" id="GO:0032991">
    <property type="term" value="C:protein-containing complex"/>
    <property type="evidence" value="ECO:0000314"/>
    <property type="project" value="CAFA"/>
</dbReference>
<dbReference type="GO" id="GO:0005179">
    <property type="term" value="F:hormone activity"/>
    <property type="evidence" value="ECO:0000318"/>
    <property type="project" value="GO_Central"/>
</dbReference>
<dbReference type="GO" id="GO:0051427">
    <property type="term" value="F:hormone receptor binding"/>
    <property type="evidence" value="ECO:0000353"/>
    <property type="project" value="UniProtKB"/>
</dbReference>
<dbReference type="GO" id="GO:0005184">
    <property type="term" value="F:neuropeptide hormone activity"/>
    <property type="evidence" value="ECO:0000315"/>
    <property type="project" value="BHF-UCL"/>
</dbReference>
<dbReference type="GO" id="GO:0071855">
    <property type="term" value="F:neuropeptide receptor binding"/>
    <property type="evidence" value="ECO:0000315"/>
    <property type="project" value="BHF-UCL"/>
</dbReference>
<dbReference type="GO" id="GO:0005102">
    <property type="term" value="F:signaling receptor binding"/>
    <property type="evidence" value="ECO:0000314"/>
    <property type="project" value="UniProtKB"/>
</dbReference>
<dbReference type="GO" id="GO:0003180">
    <property type="term" value="P:aortic valve morphogenesis"/>
    <property type="evidence" value="ECO:0000304"/>
    <property type="project" value="BHF-UCL"/>
</dbReference>
<dbReference type="GO" id="GO:0003161">
    <property type="term" value="P:cardiac conduction system development"/>
    <property type="evidence" value="ECO:0000303"/>
    <property type="project" value="BHF-UCL"/>
</dbReference>
<dbReference type="GO" id="GO:0014898">
    <property type="term" value="P:cardiac muscle hypertrophy in response to stress"/>
    <property type="evidence" value="ECO:0007669"/>
    <property type="project" value="Ensembl"/>
</dbReference>
<dbReference type="GO" id="GO:0061049">
    <property type="term" value="P:cell growth involved in cardiac muscle cell development"/>
    <property type="evidence" value="ECO:0007669"/>
    <property type="project" value="Ensembl"/>
</dbReference>
<dbReference type="GO" id="GO:1904385">
    <property type="term" value="P:cellular response to angiotensin"/>
    <property type="evidence" value="ECO:0007669"/>
    <property type="project" value="Ensembl"/>
</dbReference>
<dbReference type="GO" id="GO:0070301">
    <property type="term" value="P:cellular response to hydrogen peroxide"/>
    <property type="evidence" value="ECO:0007669"/>
    <property type="project" value="Ensembl"/>
</dbReference>
<dbReference type="GO" id="GO:0071260">
    <property type="term" value="P:cellular response to mechanical stimulus"/>
    <property type="evidence" value="ECO:0007669"/>
    <property type="project" value="Ensembl"/>
</dbReference>
<dbReference type="GO" id="GO:0006182">
    <property type="term" value="P:cGMP biosynthetic process"/>
    <property type="evidence" value="ECO:0000314"/>
    <property type="project" value="GO_Central"/>
</dbReference>
<dbReference type="GO" id="GO:0019934">
    <property type="term" value="P:cGMP-mediated signaling"/>
    <property type="evidence" value="ECO:0000318"/>
    <property type="project" value="GO_Central"/>
</dbReference>
<dbReference type="GO" id="GO:0007565">
    <property type="term" value="P:female pregnancy"/>
    <property type="evidence" value="ECO:0000250"/>
    <property type="project" value="UniProtKB"/>
</dbReference>
<dbReference type="GO" id="GO:0030308">
    <property type="term" value="P:negative regulation of cell growth"/>
    <property type="evidence" value="ECO:0007669"/>
    <property type="project" value="Ensembl"/>
</dbReference>
<dbReference type="GO" id="GO:1903815">
    <property type="term" value="P:negative regulation of collecting lymphatic vessel constriction"/>
    <property type="evidence" value="ECO:0007669"/>
    <property type="project" value="Ensembl"/>
</dbReference>
<dbReference type="GO" id="GO:0043508">
    <property type="term" value="P:negative regulation of JUN kinase activity"/>
    <property type="evidence" value="ECO:0000314"/>
    <property type="project" value="UniProtKB"/>
</dbReference>
<dbReference type="GO" id="GO:0003085">
    <property type="term" value="P:negative regulation of systemic arterial blood pressure"/>
    <property type="evidence" value="ECO:0000318"/>
    <property type="project" value="GO_Central"/>
</dbReference>
<dbReference type="GO" id="GO:0007218">
    <property type="term" value="P:neuropeptide signaling pathway"/>
    <property type="evidence" value="ECO:0000314"/>
    <property type="project" value="BHF-UCL"/>
</dbReference>
<dbReference type="GO" id="GO:0060452">
    <property type="term" value="P:positive regulation of cardiac muscle contraction"/>
    <property type="evidence" value="ECO:0000315"/>
    <property type="project" value="BHF-UCL"/>
</dbReference>
<dbReference type="GO" id="GO:0010753">
    <property type="term" value="P:positive regulation of cGMP-mediated signaling"/>
    <property type="evidence" value="ECO:0007669"/>
    <property type="project" value="Ensembl"/>
</dbReference>
<dbReference type="GO" id="GO:1902261">
    <property type="term" value="P:positive regulation of delayed rectifier potassium channel activity"/>
    <property type="evidence" value="ECO:0000314"/>
    <property type="project" value="BHF-UCL"/>
</dbReference>
<dbReference type="GO" id="GO:0010460">
    <property type="term" value="P:positive regulation of heart rate"/>
    <property type="evidence" value="ECO:0000315"/>
    <property type="project" value="BHF-UCL"/>
</dbReference>
<dbReference type="GO" id="GO:1903766">
    <property type="term" value="P:positive regulation of potassium ion export across plasma membrane"/>
    <property type="evidence" value="ECO:0000314"/>
    <property type="project" value="BHF-UCL"/>
</dbReference>
<dbReference type="GO" id="GO:0006457">
    <property type="term" value="P:protein folding"/>
    <property type="evidence" value="ECO:0000314"/>
    <property type="project" value="CAFA"/>
</dbReference>
<dbReference type="GO" id="GO:0007168">
    <property type="term" value="P:receptor guanylyl cyclase signaling pathway"/>
    <property type="evidence" value="ECO:0000314"/>
    <property type="project" value="UniProtKB"/>
</dbReference>
<dbReference type="GO" id="GO:0060372">
    <property type="term" value="P:regulation of atrial cardiac muscle cell membrane repolarization"/>
    <property type="evidence" value="ECO:0000315"/>
    <property type="project" value="BHF-UCL"/>
</dbReference>
<dbReference type="GO" id="GO:0008217">
    <property type="term" value="P:regulation of blood pressure"/>
    <property type="evidence" value="ECO:0000314"/>
    <property type="project" value="UniProtKB"/>
</dbReference>
<dbReference type="GO" id="GO:1902514">
    <property type="term" value="P:regulation of calcium ion transmembrane transport via high voltage-gated calcium channel"/>
    <property type="evidence" value="ECO:0000250"/>
    <property type="project" value="BHF-UCL"/>
</dbReference>
<dbReference type="GO" id="GO:1901841">
    <property type="term" value="P:regulation of high voltage-gated calcium channel activity"/>
    <property type="evidence" value="ECO:0000250"/>
    <property type="project" value="BHF-UCL"/>
</dbReference>
<dbReference type="GO" id="GO:1904681">
    <property type="term" value="P:response to 3-methylcholanthrene"/>
    <property type="evidence" value="ECO:0007669"/>
    <property type="project" value="Ensembl"/>
</dbReference>
<dbReference type="GO" id="GO:0001666">
    <property type="term" value="P:response to hypoxia"/>
    <property type="evidence" value="ECO:0007669"/>
    <property type="project" value="Ensembl"/>
</dbReference>
<dbReference type="GO" id="GO:0032868">
    <property type="term" value="P:response to insulin"/>
    <property type="evidence" value="ECO:0007669"/>
    <property type="project" value="Ensembl"/>
</dbReference>
<dbReference type="GO" id="GO:0035994">
    <property type="term" value="P:response to muscle stretch"/>
    <property type="evidence" value="ECO:0000304"/>
    <property type="project" value="BHF-UCL"/>
</dbReference>
<dbReference type="GO" id="GO:0036376">
    <property type="term" value="P:sodium ion export across plasma membrane"/>
    <property type="evidence" value="ECO:0007669"/>
    <property type="project" value="Ensembl"/>
</dbReference>
<dbReference type="GO" id="GO:0099538">
    <property type="term" value="P:synaptic signaling via neuropeptide"/>
    <property type="evidence" value="ECO:0007669"/>
    <property type="project" value="Ensembl"/>
</dbReference>
<dbReference type="GO" id="GO:0042311">
    <property type="term" value="P:vasodilation"/>
    <property type="evidence" value="ECO:0007669"/>
    <property type="project" value="UniProtKB-KW"/>
</dbReference>
<dbReference type="DisProt" id="DP00747"/>
<dbReference type="InterPro" id="IPR000663">
    <property type="entry name" value="Natr_peptide"/>
</dbReference>
<dbReference type="InterPro" id="IPR030480">
    <property type="entry name" value="Natr_peptide_CS"/>
</dbReference>
<dbReference type="InterPro" id="IPR050787">
    <property type="entry name" value="Natriuretic_peptide"/>
</dbReference>
<dbReference type="InterPro" id="IPR002407">
    <property type="entry name" value="Natriuretic_peptide_atrial"/>
</dbReference>
<dbReference type="PANTHER" id="PTHR14066">
    <property type="entry name" value="ATRIAL NATRIURETIC FACTOR PRECURSOR"/>
    <property type="match status" value="1"/>
</dbReference>
<dbReference type="PANTHER" id="PTHR14066:SF2">
    <property type="entry name" value="NATRIURETIC PEPTIDES A"/>
    <property type="match status" value="1"/>
</dbReference>
<dbReference type="Pfam" id="PF00212">
    <property type="entry name" value="ANP"/>
    <property type="match status" value="1"/>
</dbReference>
<dbReference type="PRINTS" id="PR00711">
    <property type="entry name" value="ANATPEPTIDE"/>
</dbReference>
<dbReference type="PRINTS" id="PR00710">
    <property type="entry name" value="NATPEPTIDES"/>
</dbReference>
<dbReference type="SMART" id="SM00183">
    <property type="entry name" value="NAT_PEP"/>
    <property type="match status" value="1"/>
</dbReference>
<dbReference type="PROSITE" id="PS00263">
    <property type="entry name" value="NATRIURETIC_PEPTIDE"/>
    <property type="match status" value="1"/>
</dbReference>
<accession>P01160</accession>
<accession>Q13766</accession>
<accession>Q5JZE1</accession>
<name>ANF_HUMAN</name>
<proteinExistence type="evidence at protein level"/>
<feature type="signal peptide" evidence="3">
    <location>
        <begin position="1"/>
        <end position="25"/>
    </location>
</feature>
<feature type="chain" id="PRO_0000449721" description="Natriuretic peptides A" evidence="30">
    <location>
        <begin position="26"/>
        <end position="151"/>
    </location>
</feature>
<feature type="peptide" id="PRO_0000449722" description="Long-acting natriuretic peptide" evidence="61 62 63">
    <location>
        <begin position="26"/>
        <end position="55"/>
    </location>
</feature>
<feature type="peptide" id="PRO_0000449723" description="Vessel dilator" evidence="61 62 63">
    <location>
        <begin position="56"/>
        <end position="92"/>
    </location>
</feature>
<feature type="propeptide" id="PRO_0000449724" evidence="59">
    <location>
        <begin position="93"/>
        <end position="103"/>
    </location>
</feature>
<feature type="peptide" id="PRO_0000449725" description="Kaliuretic peptide" evidence="60 62 63">
    <location>
        <begin position="104"/>
        <end position="123"/>
    </location>
</feature>
<feature type="peptide" id="PRO_0000449726" description="Auriculin-C" evidence="1">
    <location>
        <begin position="119"/>
        <end position="151"/>
    </location>
</feature>
<feature type="peptide" id="PRO_0000449727" description="Urodilatin" evidence="28">
    <location>
        <begin position="120"/>
        <end position="151"/>
    </location>
</feature>
<feature type="peptide" id="PRO_0000449728" description="Auriculin-D" evidence="1">
    <location>
        <begin position="121"/>
        <end position="145"/>
    </location>
</feature>
<feature type="peptide" id="PRO_0000449729" description="Atrial natriuretic peptide" evidence="5 14 30 31">
    <location>
        <begin position="124"/>
        <end position="151"/>
    </location>
</feature>
<feature type="peptide" id="PRO_0000449730" description="Auriculin-B" evidence="1">
    <location>
        <begin position="127"/>
        <end position="151"/>
    </location>
</feature>
<feature type="peptide" id="PRO_0000449731" description="Auriculin-A" evidence="1">
    <location>
        <begin position="127"/>
        <end position="150"/>
    </location>
</feature>
<feature type="peptide" id="PRO_0000449732" description="Atriopeptin-3" evidence="1">
    <location>
        <begin position="128"/>
        <end position="151"/>
    </location>
</feature>
<feature type="peptide" id="PRO_0000449733" description="Atriopeptin-2" evidence="1">
    <location>
        <begin position="128"/>
        <end position="150"/>
    </location>
</feature>
<feature type="peptide" id="PRO_0000449734" description="Atriopeptin-1" evidence="1">
    <location>
        <begin position="128"/>
        <end position="148"/>
    </location>
</feature>
<feature type="region of interest" description="Disordered" evidence="4">
    <location>
        <begin position="62"/>
        <end position="105"/>
    </location>
</feature>
<feature type="region of interest" description="Important for degradation of atrial natriuretic peptide by IDE" evidence="17">
    <location>
        <begin position="147"/>
        <end position="151"/>
    </location>
</feature>
<feature type="site" description="Cleavage; by CORIN" evidence="5">
    <location>
        <begin position="123"/>
        <end position="124"/>
    </location>
</feature>
<feature type="site" description="Cleavage; by MME" evidence="27">
    <location>
        <begin position="130"/>
        <end position="131"/>
    </location>
</feature>
<feature type="modified residue" description="Phosphoserine" evidence="23">
    <location>
        <position position="129"/>
    </location>
</feature>
<feature type="disulfide bond" evidence="12 30">
    <location>
        <begin position="130"/>
        <end position="146"/>
    </location>
</feature>
<feature type="sequence variant" id="VAR_014579" description="In dbSNP:rs5063.">
    <original>V</original>
    <variation>M</variation>
    <location>
        <position position="32"/>
    </location>
</feature>
<feature type="sequence variant" id="VAR_071307" description="In ATRST2; dbSNP:rs202102042." evidence="22">
    <original>R</original>
    <variation>Q</variation>
    <location>
        <position position="150"/>
    </location>
</feature>
<feature type="sequence variant" id="VAR_082651" evidence="13 32">
    <original>Y</original>
    <variation>YRR</variation>
    <location>
        <position position="151"/>
    </location>
</feature>
<feature type="mutagenesis site" description="Loss of cleavage by CORIN." evidence="5">
    <original>R</original>
    <variation>G</variation>
    <location>
        <position position="123"/>
    </location>
</feature>
<feature type="mutagenesis site" description="No effect on degradation of atrial natriuretic peptide by IDE." evidence="17">
    <location>
        <begin position="124"/>
        <end position="129"/>
    </location>
</feature>
<feature type="mutagenesis site" description="Reduced degradation of atrial natriuretic peptide by IDE; when associated with N-147--151-Y DEL." evidence="17">
    <location>
        <begin position="124"/>
        <end position="126"/>
    </location>
</feature>
<feature type="mutagenesis site" description="Reduced degradation of atrial natriuretic peptide by IDE; when associated with S-124--126-R DEL." evidence="17">
    <location>
        <begin position="147"/>
        <end position="151"/>
    </location>
</feature>
<feature type="sequence conflict" description="In Ref. 6; AAA35529." evidence="59" ref="6">
    <original>E</original>
    <variation>D</variation>
    <location>
        <position position="65"/>
    </location>
</feature>
<feature type="strand" evidence="66">
    <location>
        <begin position="129"/>
        <end position="133"/>
    </location>
</feature>
<feature type="strand" evidence="65">
    <location>
        <begin position="139"/>
        <end position="141"/>
    </location>
</feature>
<feature type="strand" evidence="66">
    <location>
        <begin position="144"/>
        <end position="146"/>
    </location>
</feature>
<sequence>MSSFSTTTVSFLLLLAFQLLGQTRANPMYNAVSNADLMDFKNLLDHLEEKMPLEDEVVPPQVLSEPNEEAGAALSPLPEVPPWTGEVSPAQRDGGALGRGPWDSSDRSALLKSKLRALLTAPRSLRRSSCFGGRMDRIGAQSGLGCNSFRY</sequence>
<keyword id="KW-0002">3D-structure</keyword>
<keyword id="KW-1020">Atrial fibrillation</keyword>
<keyword id="KW-0122">Cardiomyopathy</keyword>
<keyword id="KW-0966">Cell projection</keyword>
<keyword id="KW-0903">Direct protein sequencing</keyword>
<keyword id="KW-0225">Disease variant</keyword>
<keyword id="KW-1015">Disulfide bond</keyword>
<keyword id="KW-0372">Hormone</keyword>
<keyword id="KW-0597">Phosphoprotein</keyword>
<keyword id="KW-1267">Proteomics identification</keyword>
<keyword id="KW-1185">Reference proteome</keyword>
<keyword id="KW-0964">Secreted</keyword>
<keyword id="KW-0732">Signal</keyword>
<keyword id="KW-0838">Vasoactive</keyword>
<keyword id="KW-0840">Vasodilator</keyword>
<comment type="function">
    <molecule>Atrial natriuretic peptide</molecule>
    <text evidence="2 8 10 11 13 16 17 18 19 21 24 25 26 33 34 38 40 41 45">Hormone that plays a key role in mediating cardio-renal homeostasis, and is involved in vascular remodeling and regulating energy metabolism (PubMed:15741263, PubMed:16875975, PubMed:18835931, PubMed:21672517, PubMed:22307324, PubMed:2532366, PubMed:2825692, PubMed:7595132, PubMed:7720651, PubMed:8087923, PubMed:8653797). Acts by specifically binding and stimulating NPR1 to produce cGMP, which in turn activates effector proteins, such as PRKG1, that drive various biological responses (PubMed:1660465, PubMed:1672777, PubMed:21098034, PubMed:2162527, PubMed:22307324, PubMed:25401746, PubMed:2825692, PubMed:7720651, PubMed:8384600, PubMed:9893117). Regulates vasodilation, natriuresis, diuresis and aldosterone synthesis and is therefore essential for regulating blood pressure, controlling the extracellular fluid volume and maintaining the fluid-electrolyte balance (PubMed:2532366, PubMed:2825692, PubMed:7595132, PubMed:7720651, PubMed:8087923, PubMed:8653797). Also involved in inhibiting cardiac remodeling and cardiac hypertrophy by inducing cardiomyocyte apoptosis and attenuating the growth of cardiomyocytes and fibroblasts (PubMed:16875975). Plays a role in female pregnancy by promoting trophoblast invasion and spiral artery remodeling in uterus, and thus prevents pregnancy-induced hypertension (By similarity). In adipose tissue, acts in various cGMP- and PKG-dependent pathways to regulate lipid metabolism and energy homeostasis (PubMed:15741263, PubMed:18835931, PubMed:21672517, PubMed:22307324). This includes up-regulating lipid metabolism and mitochondrial oxygen utilization by activating the AMP-activated protein kinase (AMPK), and increasing energy expenditure by acting via MAPK11 to promote the UCP1-dependent thermogenesis of brown adipose tissue (PubMed:15741263, PubMed:18835931, PubMed:21672517, PubMed:22307324). Binds the clearance receptor NPR3 which removes the hormone from circulation (PubMed:1672777).</text>
</comment>
<comment type="function">
    <molecule>Long-acting natriuretic peptide</molecule>
    <text evidence="1 6 18 24 26 33 34 36 38 41">May have a role in cardio-renal homeostasis through regulation of natriuresis, diuresis, vasodilation, and inhibiting aldosterone synthesis (PubMed:2532366, PubMed:2825692, PubMed:7595132, PubMed:7955907, PubMed:8087923, PubMed:8653797). In vitro, promotes the production of cGMP and induces vasodilation (PubMed:2825692). May promote natriuresis, at least in part, by enhancing prostaglandin E2 synthesis resulting in the inhibition of renal Na+-K+-ATPase (PubMed:7720651). However reports on the involvement of this peptide in mammal blood volume and blood pressure homeostasis are conflicting; according to a report, in vivo it is not sufficient to activate cGMP and does not inhibit collecting duct transport nor effect diuresis and natriuresis (By similarity). Appears to bind to specific receptors that are distinct from the receptors bound by atrial natriuretic peptide and vessel dilator (PubMed:2162527, PubMed:2825692). Possibly enhances protein excretion in urine by decreasing proximal tubular protein reabsorption (PubMed:11145122).</text>
</comment>
<comment type="function">
    <molecule>Vessel dilator</molecule>
    <text evidence="6 18 24 26 33 34 35 36 38 41">May have a role in cardio-renal homeostasis through regulation of natriuresis, diuresis, and vasodilation (PubMed:2532366, PubMed:7595132, PubMed:7955907, PubMed:8087923, PubMed:8653797). In vitro, promotes the production of cGMP and induces vasodilation (PubMed:2825692). May promote natriuresis, at least in part, by enhancing prostaglandin E2 synthesis resulting in the inhibition of renal Na+-K+-ATPase (PubMed:7595132, PubMed:7720651). However reports on the involvement of this peptide in mammal blood volume and blood pressure homeostasis are conflicting; according to a report it is not sufficient to activate cGMP and does not inhibit collecting duct transport nor effect diuresis and natriuresis (PubMed:7831500). Appears to bind to specific receptors that are distinct from the receptors bound by the atrial natriuretic and long-acting natriuretic peptides (PubMed:2162527, PubMed:2825692). Possibly functions in protein excretion in urine by maintaining the integrity of the proximal tubules and enhancing protein excretion by decreasing proximal tubular protein reabsorption (PubMed:11145122).</text>
</comment>
<comment type="function">
    <molecule>Kaliuretic peptide</molecule>
    <text evidence="6 26 33 34 38">May have a role in cardio-renal homeostasis through regulation of diuresis and inhibiting aldosterone synthesis (PubMed:2825692, PubMed:7595132, PubMed:8087923). In vitro, promotes the production of cGMP and induces vasodilation (PubMed:2825692). May promote natriuresis, at least in part, by enhancing prostaglandin E2 synthesis resulting in the inhibition of renal Na+-K+-ATPase (PubMed:7595132, PubMed:7720651). May have a role in potassium excretion but not sodium excretion (natriuresis) (PubMed:8087923). Possibly enhances protein excretion in urine by decreasing proximal tubular protein reabsorption (PubMed:11145122).</text>
</comment>
<comment type="function">
    <molecule>Urodilatin</molecule>
    <text evidence="23 39 40 42 43 45">Hormone produced in the kidneys that appears to be important for maintaining cardio-renal homeostasis (PubMed:8351194, PubMed:8779891, PubMed:8853410). Mediates vasodilation, natriuresis and diuresis primarily in the renal system, in order to maintain the extracellular fluid volume and control the fluid-electrolyte balance (PubMed:2528951, PubMed:8351194, PubMed:8779891, PubMed:8853410). Specifically binds and stimulates cGMP production by renal transmembrane receptors, likely NPR1 (PubMed:8384600, PubMed:9893117). Urodilatin not ANP, may be the natriuretic peptide responsible for the regulation of sodium and water homeostasis in the kidney (PubMed:8384600, PubMed:8779891).</text>
</comment>
<comment type="function">
    <molecule>Auriculin-D</molecule>
    <text evidence="1">May have a role in cardio-renal homeostasis through regulation of natriuresis and vasodilation. In vivo promotes natriuresis and in vitro, vasodilates renal artery strips.</text>
</comment>
<comment type="function">
    <molecule>Auriculin-B</molecule>
    <text evidence="1">May have a role in cardio-renal homeostasis through regulation of natriuresis and vasodilation. In vivo promotes natriuresis and in vitro, vasodilates renal artery strips.</text>
</comment>
<comment type="function">
    <molecule>Auriculin-A</molecule>
    <text evidence="1">May have a role in cardio-renal homeostasis through regulation of regulation of natriuresis and vasodilation. In vivo promotes natriuresis. In vitro, vasodilates intestinal smooth muscle but not smooth muscle strips.</text>
</comment>
<comment type="function">
    <molecule>Atriopeptin-2</molecule>
    <text evidence="1">May have a role in cardio-renal homeostasis through regulation of natriuresis and vasodilation. In vivo promotes natriuresis. In vitro, selectively vasodilates intestinal and vascular smooth muscle strips.</text>
</comment>
<comment type="function">
    <molecule>Atriopeptin-1</molecule>
    <text evidence="1">May have a role in cardio-renal homeostasis through regulation of natriuresis and vasodilation. In vivo promotes natriuresis. In vitro, selectively vasodilates intestinal smooth muscle but not vascular smooth muscle strips.</text>
</comment>
<comment type="subunit">
    <molecule>Atrial natriuretic peptide</molecule>
    <text evidence="30">Homodimer; disulfide-linked antiparallel dimer.</text>
</comment>
<comment type="interaction">
    <interactant intactId="EBI-953859">
        <id>P01160</id>
    </interactant>
    <interactant intactId="EBI-7116203">
        <id>O75031</id>
        <label>HSF2BP</label>
    </interactant>
    <organismsDiffer>false</organismsDiffer>
    <experiments>3</experiments>
</comment>
<comment type="interaction">
    <interactant intactId="EBI-953859">
        <id>P01160</id>
    </interactant>
    <interactant intactId="EBI-749530">
        <id>P43365</id>
        <label>MAGEA12</label>
    </interactant>
    <organismsDiffer>false</organismsDiffer>
    <experiments>6</experiments>
</comment>
<comment type="interaction">
    <interactant intactId="EBI-953859">
        <id>P01160</id>
    </interactant>
    <interactant intactId="EBI-741480">
        <id>Q9UMX0</id>
        <label>UBQLN1</label>
    </interactant>
    <organismsDiffer>false</organismsDiffer>
    <experiments>3</experiments>
</comment>
<comment type="interaction">
    <interactant intactId="EBI-953859">
        <id>P01160</id>
    </interactant>
    <interactant intactId="EBI-947187">
        <id>Q9UHD9</id>
        <label>UBQLN2</label>
    </interactant>
    <organismsDiffer>false</organismsDiffer>
    <experiments>3</experiments>
</comment>
<comment type="subcellular location">
    <molecule>Long-acting natriuretic peptide</molecule>
    <subcellularLocation>
        <location evidence="24 36 37 41">Secreted</location>
    </subcellularLocation>
    <text evidence="24 36 37 41">Detected in blood.</text>
</comment>
<comment type="subcellular location">
    <molecule>Vessel dilator</molecule>
    <subcellularLocation>
        <location evidence="24 36 37 41">Secreted</location>
    </subcellularLocation>
    <text evidence="24 36 37 41">Detected in blood.</text>
</comment>
<comment type="subcellular location">
    <molecule>Kaliuretic peptide</molecule>
    <subcellularLocation>
        <location evidence="37">Secreted</location>
    </subcellularLocation>
    <text evidence="37">Detected in blood.</text>
</comment>
<comment type="subcellular location">
    <molecule>Urodilatin</molecule>
    <subcellularLocation>
        <location evidence="28 39 42 43 44 45">Secreted</location>
    </subcellularLocation>
    <text evidence="28 39 42 43 44 45">Detected in urine (PubMed:2972874, PubMed:8351194, PubMed:8779891, PubMed:9794555). Not detected in blood (PubMed:8351194). Increased electrolytes, osmolality and intracellular cAMP levels increase peptide secretion/excretion (PubMed:8351194, PubMed:8779891, PubMed:8853410, PubMed:9893117).</text>
</comment>
<comment type="subcellular location">
    <molecule>Atrial natriuretic peptide</molecule>
    <subcellularLocation>
        <location evidence="8 16 24 28 36 37 39 41 42 45">Secreted</location>
    </subcellularLocation>
    <subcellularLocation>
        <location evidence="29">Perikaryon</location>
    </subcellularLocation>
    <subcellularLocation>
        <location evidence="29">Cell projection</location>
    </subcellularLocation>
    <text evidence="1 8 16 24 29 36 37 39 41 42 45">Detected in blood (PubMed:15741263, PubMed:18835931, PubMed:2532366, PubMed:7955907, PubMed:7984506, PubMed:8351194, PubMed:8653797, PubMed:8779891). Detected in urine in one study (PubMed:8351194). However, in another study, was not detected in urine (PubMed:7984506). Detected in cytoplasmic bodies and neuronal processes of pyramidal neurons (layers II-VI) (PubMed:30534047). Increased secretion in response to the vasopressin AVP (By similarity). Likely to be secreted in response to an increase in atrial pressure or atrial stretch (PubMed:2532366). In kidney cells, secretion increases in response to activated guanylyl cyclases and increased intracellular cAMP levels (PubMed:9893117). Plasma levels increase 15 minutes after a high-salt meal, and decrease back to normal plasma levels 1 hr later (PubMed:8779891).</text>
</comment>
<comment type="subcellular location">
    <molecule>Atriopeptin-3</molecule>
    <subcellularLocation>
        <location evidence="1">Secreted</location>
    </subcellularLocation>
    <text evidence="1">Detected in blood. Slight increase in secretion in response to the vasopressin AVP.</text>
</comment>
<comment type="tissue specificity">
    <molecule>Urodilatin</molecule>
    <text evidence="28 39 40 42 44">Detected in the kidney distal tubular cells (at protein level) (PubMed:8384600, PubMed:9794555). Present in urine (at protein level) (PubMed:2972874, PubMed:8351194, PubMed:8779891, PubMed:9794555).</text>
</comment>
<comment type="tissue specificity">
    <molecule>Atrial natriuretic peptide</molecule>
    <text evidence="19 20 29 37 39 40 44">Detected in atrial and ventricular plasma samples, and in adipocytes (at protein level) (PubMed:21672517, PubMed:22291141). Detected in urine in one study (PubMed:8351194). However, was not detected in urine in another study (PubMed:7984506). In the brain, predominantly expressed in the gray matter with very weak expression in the white matter (at protein level) (PubMed:30534047). Localizes to astrocyte-like structures throughout the white matter, and in the cerebral vessels detected in the leptomeningeal and parenchymal vessels, and endothelium and smooth muscle layers (at protein level) (PubMed:30534047). Relatively low levels of expression in the kidneys compared to urodilatin (at protein level) (PubMed:8384600, PubMed:9794555).</text>
</comment>
<comment type="PTM">
    <text evidence="1 5 7 24 28 36 37 39 44">The precursor molecule is proteolytically cleaved by CORIN at Arg-123 to produce atrial natriuretic peptide (PubMed:10880574, PubMed:14559895, PubMed:7984506). Undergoes further proteolytic cleavage by unknown proteases to give rise to long-acting natriuretic peptide, vessel dilator and kaliuretic peptide (PubMed:2532366, PubMed:7955907, PubMed:7984506). Additional processing gives rise to the auriculin and atriopeptin peptides (By similarity). In the kidneys, alternative processing by an unknown protease results in the peptide urodilatin (PubMed:2972874, PubMed:8351194, PubMed:9794555).</text>
</comment>
<comment type="PTM">
    <molecule>Atrial natriuretic peptide</molecule>
    <text evidence="9 17 27">Cleavage by MME initiates degradation of the factor and thereby regulates its activity (PubMed:16254193, PubMed:2972276). Degraded by IDE (in vitro) (PubMed:21098034). During IDE degradation, the resulting products can temporarily stimulate NPR2 to produce cGMP, before the fragments are completely degraded and inactivated by IDE (in vitro) (PubMed:21098034).</text>
</comment>
<comment type="PTM">
    <molecule>Urodilatin</molecule>
    <text evidence="17">Degraded by IDE.</text>
</comment>
<comment type="PTM">
    <molecule>Urodilatin</molecule>
    <text evidence="23">Phosphorylation on Ser-129 decreases vasorelaxant activity.</text>
</comment>
<comment type="disease" evidence="22">
    <disease id="DI-04075">
        <name>Atrial standstill 2</name>
        <acronym>ATRST2</acronym>
        <description>A rare arrhythmia characterized by the absence of electrical and mechanical activity in the atria. Electrocardiographically, it is characterized by bradycardia, the absence of P waves, and a junctional narrow complex escape rhythm.</description>
        <dbReference type="MIM" id="615745"/>
    </disease>
    <text>The disease is caused by variants affecting the gene represented in this entry.</text>
</comment>
<comment type="disease" evidence="15">
    <disease id="DI-00148">
        <name>Atrial fibrillation, familial, 6</name>
        <acronym>ATFB6</acronym>
        <description>A familial form of atrial fibrillation, a common sustained cardiac rhythm disturbance. Atrial fibrillation is characterized by disorganized atrial electrical activity and ineffective atrial contraction promoting blood stasis in the atria and reduces ventricular filling. It can result in palpitations, syncope, thromboembolic stroke, and congestive heart failure.</description>
        <dbReference type="MIM" id="612201"/>
    </disease>
    <text>The disease is caused by variants affecting the gene represented in this entry.</text>
</comment>
<comment type="similarity">
    <text evidence="59">Belongs to the natriuretic peptide family.</text>
</comment>
<comment type="caution">
    <molecule>Long-acting natriuretic peptide</molecule>
    <text evidence="1 26 34">Results concerning the involvement of this peptide in blood volume and blood pressure homeostasis are conflicting. Several studies utilising in vitro and heterologous expression systems show that it is able to activate cGMP and promote vasodilation and natriuresis (PubMed:2825692, PubMed:7720651). However, an in vivo study in rat found that it is not sufficient to induce any diuretic, natriuretic, nor hypotensive responses, and is unable to bind NPR1 nor increase guanylyl cyclase activity (By similarity).</text>
</comment>
<comment type="caution">
    <molecule>Vessel dilator</molecule>
    <text evidence="26 33 34 35">Results concerning the involvement of this peptide in blood volume and blood pressure homeostasis are conflicting. Several studies utilising in vitro and heterologous expression systems show that it is able to activate cGMP and promote vasodilation and natriuresis (PubMed:2825692, PubMed:7595132, PubMed:7720651). However, a heterologous expression study in rat found that it is not sufficient to induce any diuretic, natriuretic, nor hypotensive responses, and is unable to bind NPR1 nor increase guanylyl cyclase activity (PubMed:7831500).</text>
</comment>
<comment type="online information" name="Wikipedia">
    <link uri="https://en.wikipedia.org/wiki/Atrial_natriuretic_peptide"/>
    <text>Atrial natriuretic peptide entry</text>
</comment>
<reference key="1">
    <citation type="journal article" date="1984" name="Nature">
        <title>Cloning and sequence analysis of cDNA encoding a precursor for human atrial natriuretic polypeptide.</title>
        <authorList>
            <person name="Oikawa S."/>
            <person name="Imai M."/>
            <person name="Ueno A."/>
            <person name="Tanaka S."/>
            <person name="Noguchi T."/>
            <person name="Nakazato H."/>
            <person name="Kangawa K."/>
            <person name="Fukuda A."/>
            <person name="Matsuo H."/>
        </authorList>
    </citation>
    <scope>NUCLEOTIDE SEQUENCE [MRNA]</scope>
</reference>
<reference key="2">
    <citation type="journal article" date="1984" name="Nature">
        <title>mRNA sequence for human cardiodilatin-atrial natriuretic factor precursor and regulation of precursor mRNA in rat atria.</title>
        <authorList>
            <person name="Nakayama K."/>
            <person name="Ohkubo H."/>
            <person name="Hirose T."/>
            <person name="Inayama S."/>
            <person name="Nakanishi S."/>
        </authorList>
    </citation>
    <scope>NUCLEOTIDE SEQUENCE [MRNA]</scope>
</reference>
<reference key="3">
    <citation type="journal article" date="1984" name="Nature">
        <title>Gene structure of human cardiac hormone precursor, pronatriodilatin.</title>
        <authorList>
            <person name="Nemer M."/>
            <person name="Chamberland M."/>
            <person name="Sirois D."/>
            <person name="Argentin S."/>
            <person name="Drouin J."/>
            <person name="Dixon R.A.F."/>
            <person name="Zivin R.A."/>
            <person name="Condra J.H."/>
        </authorList>
    </citation>
    <scope>NUCLEOTIDE SEQUENCE [GENOMIC DNA]</scope>
</reference>
<reference key="4">
    <citation type="journal article" date="1984" name="Nature">
        <title>Nucleotide sequence of the gene encoding human atrial natriuretic factor precursor.</title>
        <authorList>
            <person name="Greenberg B.D."/>
            <person name="Bencen G.H."/>
            <person name="Seilhamer J.J."/>
            <person name="Lewicki J.A."/>
            <person name="Fiddes J.C."/>
        </authorList>
    </citation>
    <scope>NUCLEOTIDE SEQUENCE [GENOMIC DNA]</scope>
</reference>
<reference key="5">
    <citation type="journal article" date="1984" name="Science">
        <title>Nucleotide sequences of the human and mouse atrial natriuretic factor genes.</title>
        <authorList>
            <person name="Seidman C.E."/>
            <person name="Bloch K.D."/>
            <person name="Klein K.A."/>
            <person name="Smith J.A."/>
            <person name="Seidman J.G."/>
        </authorList>
    </citation>
    <scope>NUCLEOTIDE SEQUENCE [GENOMIC DNA]</scope>
</reference>
<reference key="6">
    <citation type="journal article" date="1985" name="Hypertension">
        <title>Molecular studies of the atrial natriuretic factor gene.</title>
        <authorList>
            <person name="Seidman C.E."/>
            <person name="Bloch K.D."/>
            <person name="Zisfein J."/>
            <person name="Smit J."/>
            <person name="Haber E."/>
            <person name="Homcy C."/>
            <person name="Duby A.D."/>
            <person name="Choi E."/>
            <person name="Graham R.M."/>
            <person name="Seidman J.G."/>
        </authorList>
    </citation>
    <scope>NUCLEOTIDE SEQUENCE [GENOMIC DNA]</scope>
</reference>
<reference key="7">
    <citation type="submission" date="2007-12" db="EMBL/GenBank/DDBJ databases">
        <authorList>
            <consortium name="NHLBI resequencing and genotyping service (RS&amp;G)"/>
        </authorList>
    </citation>
    <scope>NUCLEOTIDE SEQUENCE [GENOMIC DNA]</scope>
</reference>
<reference key="8">
    <citation type="journal article" date="2006" name="Nature">
        <title>The DNA sequence and biological annotation of human chromosome 1.</title>
        <authorList>
            <person name="Gregory S.G."/>
            <person name="Barlow K.F."/>
            <person name="McLay K.E."/>
            <person name="Kaul R."/>
            <person name="Swarbreck D."/>
            <person name="Dunham A."/>
            <person name="Scott C.E."/>
            <person name="Howe K.L."/>
            <person name="Woodfine K."/>
            <person name="Spencer C.C.A."/>
            <person name="Jones M.C."/>
            <person name="Gillson C."/>
            <person name="Searle S."/>
            <person name="Zhou Y."/>
            <person name="Kokocinski F."/>
            <person name="McDonald L."/>
            <person name="Evans R."/>
            <person name="Phillips K."/>
            <person name="Atkinson A."/>
            <person name="Cooper R."/>
            <person name="Jones C."/>
            <person name="Hall R.E."/>
            <person name="Andrews T.D."/>
            <person name="Lloyd C."/>
            <person name="Ainscough R."/>
            <person name="Almeida J.P."/>
            <person name="Ambrose K.D."/>
            <person name="Anderson F."/>
            <person name="Andrew R.W."/>
            <person name="Ashwell R.I.S."/>
            <person name="Aubin K."/>
            <person name="Babbage A.K."/>
            <person name="Bagguley C.L."/>
            <person name="Bailey J."/>
            <person name="Beasley H."/>
            <person name="Bethel G."/>
            <person name="Bird C.P."/>
            <person name="Bray-Allen S."/>
            <person name="Brown J.Y."/>
            <person name="Brown A.J."/>
            <person name="Buckley D."/>
            <person name="Burton J."/>
            <person name="Bye J."/>
            <person name="Carder C."/>
            <person name="Chapman J.C."/>
            <person name="Clark S.Y."/>
            <person name="Clarke G."/>
            <person name="Clee C."/>
            <person name="Cobley V."/>
            <person name="Collier R.E."/>
            <person name="Corby N."/>
            <person name="Coville G.J."/>
            <person name="Davies J."/>
            <person name="Deadman R."/>
            <person name="Dunn M."/>
            <person name="Earthrowl M."/>
            <person name="Ellington A.G."/>
            <person name="Errington H."/>
            <person name="Frankish A."/>
            <person name="Frankland J."/>
            <person name="French L."/>
            <person name="Garner P."/>
            <person name="Garnett J."/>
            <person name="Gay L."/>
            <person name="Ghori M.R.J."/>
            <person name="Gibson R."/>
            <person name="Gilby L.M."/>
            <person name="Gillett W."/>
            <person name="Glithero R.J."/>
            <person name="Grafham D.V."/>
            <person name="Griffiths C."/>
            <person name="Griffiths-Jones S."/>
            <person name="Grocock R."/>
            <person name="Hammond S."/>
            <person name="Harrison E.S.I."/>
            <person name="Hart E."/>
            <person name="Haugen E."/>
            <person name="Heath P.D."/>
            <person name="Holmes S."/>
            <person name="Holt K."/>
            <person name="Howden P.J."/>
            <person name="Hunt A.R."/>
            <person name="Hunt S.E."/>
            <person name="Hunter G."/>
            <person name="Isherwood J."/>
            <person name="James R."/>
            <person name="Johnson C."/>
            <person name="Johnson D."/>
            <person name="Joy A."/>
            <person name="Kay M."/>
            <person name="Kershaw J.K."/>
            <person name="Kibukawa M."/>
            <person name="Kimberley A.M."/>
            <person name="King A."/>
            <person name="Knights A.J."/>
            <person name="Lad H."/>
            <person name="Laird G."/>
            <person name="Lawlor S."/>
            <person name="Leongamornlert D.A."/>
            <person name="Lloyd D.M."/>
            <person name="Loveland J."/>
            <person name="Lovell J."/>
            <person name="Lush M.J."/>
            <person name="Lyne R."/>
            <person name="Martin S."/>
            <person name="Mashreghi-Mohammadi M."/>
            <person name="Matthews L."/>
            <person name="Matthews N.S.W."/>
            <person name="McLaren S."/>
            <person name="Milne S."/>
            <person name="Mistry S."/>
            <person name="Moore M.J.F."/>
            <person name="Nickerson T."/>
            <person name="O'Dell C.N."/>
            <person name="Oliver K."/>
            <person name="Palmeiri A."/>
            <person name="Palmer S.A."/>
            <person name="Parker A."/>
            <person name="Patel D."/>
            <person name="Pearce A.V."/>
            <person name="Peck A.I."/>
            <person name="Pelan S."/>
            <person name="Phelps K."/>
            <person name="Phillimore B.J."/>
            <person name="Plumb R."/>
            <person name="Rajan J."/>
            <person name="Raymond C."/>
            <person name="Rouse G."/>
            <person name="Saenphimmachak C."/>
            <person name="Sehra H.K."/>
            <person name="Sheridan E."/>
            <person name="Shownkeen R."/>
            <person name="Sims S."/>
            <person name="Skuce C.D."/>
            <person name="Smith M."/>
            <person name="Steward C."/>
            <person name="Subramanian S."/>
            <person name="Sycamore N."/>
            <person name="Tracey A."/>
            <person name="Tromans A."/>
            <person name="Van Helmond Z."/>
            <person name="Wall M."/>
            <person name="Wallis J.M."/>
            <person name="White S."/>
            <person name="Whitehead S.L."/>
            <person name="Wilkinson J.E."/>
            <person name="Willey D.L."/>
            <person name="Williams H."/>
            <person name="Wilming L."/>
            <person name="Wray P.W."/>
            <person name="Wu Z."/>
            <person name="Coulson A."/>
            <person name="Vaudin M."/>
            <person name="Sulston J.E."/>
            <person name="Durbin R.M."/>
            <person name="Hubbard T."/>
            <person name="Wooster R."/>
            <person name="Dunham I."/>
            <person name="Carter N.P."/>
            <person name="McVean G."/>
            <person name="Ross M.T."/>
            <person name="Harrow J."/>
            <person name="Olson M.V."/>
            <person name="Beck S."/>
            <person name="Rogers J."/>
            <person name="Bentley D.R."/>
        </authorList>
    </citation>
    <scope>NUCLEOTIDE SEQUENCE [LARGE SCALE GENOMIC DNA]</scope>
</reference>
<reference key="9">
    <citation type="journal article" date="2004" name="Genome Res.">
        <title>The status, quality, and expansion of the NIH full-length cDNA project: the Mammalian Gene Collection (MGC).</title>
        <authorList>
            <consortium name="The MGC Project Team"/>
        </authorList>
    </citation>
    <scope>NUCLEOTIDE SEQUENCE [LARGE SCALE MRNA]</scope>
    <source>
        <tissue>Prostate</tissue>
    </source>
</reference>
<reference key="10">
    <citation type="journal article" date="1984" name="Biochem. Biophys. Res. Commun.">
        <title>Cloning of genomic DNA for human atrial natriuretic factor.</title>
        <authorList>
            <person name="Maki M."/>
            <person name="Parmentier M."/>
            <person name="Inagami T."/>
        </authorList>
    </citation>
    <scope>NUCLEOTIDE SEQUENCE [GENOMIC DNA] OF 1-75</scope>
</reference>
<reference key="11">
    <citation type="journal article" date="1984" name="Proc. Natl. Acad. Sci. U.S.A.">
        <title>Molecular cloning and characterization of DNA sequences encoding rat and human atrial natriuretic factors.</title>
        <authorList>
            <person name="Zivin R.A."/>
            <person name="Condra J.H."/>
            <person name="Dixon R.A.F."/>
            <person name="Seidah N.G."/>
            <person name="Chretien M."/>
            <person name="Nemer M."/>
            <person name="Chamberland M."/>
            <person name="Drouin J."/>
        </authorList>
    </citation>
    <scope>NUCLEOTIDE SEQUENCE [MRNA] OF 118-151</scope>
    <scope>VARIANT ARG-ARG-151 EXT</scope>
</reference>
<reference key="12">
    <citation type="journal article" date="1984" name="Biochem. Biophys. Res. Commun.">
        <title>Purification and complete amino acid sequence of alpha-human atrial natriuretic polypeptide (alpha-hANP).</title>
        <authorList>
            <person name="Kangawa K."/>
            <person name="Matsuo H."/>
        </authorList>
    </citation>
    <scope>PROTEIN SEQUENCE OF 124-151</scope>
</reference>
<reference key="13">
    <citation type="journal article" date="1985" name="Nature">
        <title>Structural identification of beta- and gamma-human atrial natriuretic polypeptides.</title>
        <authorList>
            <person name="Kangawa K."/>
            <person name="Fukuda A."/>
            <person name="Matsuo H."/>
        </authorList>
    </citation>
    <scope>PROTEIN SEQUENCE OF 26-151</scope>
    <scope>SUBUNIT (ATRIAL NATRIURETIC PEPTIDE)</scope>
    <scope>DISULFIDE BOND</scope>
    <source>
        <tissue evidence="51">Heart atrium</tissue>
    </source>
</reference>
<reference key="14">
    <citation type="journal article" date="1988" name="J. Mol. Med.">
        <title>Isolation and structural analysis of 'urodilatin', a new peptide of the cardiodilatin-(ANP)-family, extracted from human urine.</title>
        <authorList>
            <person name="Schulz-Knappe P."/>
            <person name="Forssmann K."/>
            <person name="Herbst F."/>
            <person name="Hock D."/>
            <person name="Pipkorn R."/>
            <person name="Forssmann W.G."/>
        </authorList>
    </citation>
    <scope>PROTEIN SEQUENCE OF 120-151</scope>
    <scope>SYNTHESIS (URODILATIN)</scope>
    <scope>SUBCELLULAR LOCATION (URODILATIN AND ATRIAL NATRIURETIC PEPTIDE)</scope>
    <scope>TISSUE SPECIFICITY (URODILATIN)</scope>
    <scope>PROTEOLYTIC PROCESSING (URODILATIN)</scope>
    <source>
        <tissue evidence="49">Urine</tissue>
    </source>
</reference>
<reference key="15">
    <citation type="journal article" date="1991" name="Eur. J. Biochem.">
        <title>Hydrolysis of intact and Cys-Phe-cleaved human atrial natriuretic peptide in vitro by human tissue kallikrein.</title>
        <authorList>
            <person name="Vanneste Y."/>
            <person name="Michel A."/>
            <person name="Deschodt-Lanckman M."/>
        </authorList>
    </citation>
    <scope>PROTEIN SEQUENCE OF 124-151</scope>
</reference>
<reference key="16">
    <citation type="journal article" date="1987" name="Biochem. Biophys. Res. Commun.">
        <title>Atrial natriuretic prohormone peptides 1-30, 31-67, and 79-98 vasodilate the aorta.</title>
        <authorList>
            <person name="Vesely D.L."/>
            <person name="Norris J.S."/>
            <person name="Walters J.M."/>
            <person name="Jespersen R.R."/>
            <person name="Baeyens D.A."/>
        </authorList>
    </citation>
    <scope>FUNCTION (LONG-ACTING NATRIURETIC PEPTIDE; VESSEL DILATOR; KALIURETIC PEPTIDE AND ATRIAL NATRIURETIC PEPTIDE)</scope>
</reference>
<reference key="17">
    <citation type="journal article" date="1988" name="Biochem. J.">
        <title>Hydrolysis of alpha-human atrial natriuretic peptide in vitro by human kidney membranes and purified endopeptidase-24.11. Evidence for a novel cleavage site.</title>
        <authorList>
            <person name="Vanneste Y."/>
            <person name="Michel A."/>
            <person name="Dimaline R."/>
            <person name="Najdovski T."/>
            <person name="Deschodt-Lanckman M."/>
        </authorList>
    </citation>
    <scope>PROTEOLYTIC PROCESSING BY MME (ATRIAL NATRIURETIC FACTOR)</scope>
    <scope>CLEAVAGE SITE</scope>
</reference>
<reference key="18">
    <citation type="journal article" date="1989" name="Proc. Soc. Exp. Biol. Med.">
        <title>Increased release of the N-terminal and C-terminal portions of the prohormone of atrial natriuretic factor during immersion-induced central hypervolemia in normal humans.</title>
        <authorList>
            <person name="Vesely D.L."/>
            <person name="Norsk P."/>
            <person name="Winters C.J."/>
            <person name="Rico D.M."/>
            <person name="Sallman A.L."/>
            <person name="Epstein M."/>
        </authorList>
    </citation>
    <scope>FUNCTION (LONG-ACTING NATRIURETIC PEPTIDE; VESSEL DILATOR AND ATRIAL NATRIURETIC PEPTIDE)</scope>
    <scope>SUBCELLULAR LOCATION (LONG-ACTING NATRIURETIC PEPTIDE; VESSEL DILATOR AND ATRIAL NATRIURETIC PEPTIDE)</scope>
    <scope>PROTEOLYTIC PROCESSING</scope>
</reference>
<reference key="19">
    <citation type="journal article" date="1989" name="Biochem. Biophys. Res. Commun.">
        <title>Phosphorylation and dephosphorylation of the natriuretic peptide urodilatin (CDD-/ANP-95-126) and the effect on biological activity.</title>
        <authorList>
            <person name="Doerner T."/>
            <person name="Gagelmann M."/>
            <person name="Feller S."/>
            <person name="Herbst F."/>
            <person name="Forssmann W.G."/>
        </authorList>
    </citation>
    <scope>SYNTHESIS (URODILATIN)</scope>
    <scope>FUNCTION (URODILATIN)</scope>
    <scope>PHOSPHORYLATION AT SER-129 (URODILATIN)</scope>
</reference>
<reference key="20">
    <citation type="journal article" date="1990" name="Peptides">
        <title>Specific binding sites for prohormone atrial natriuretic peptides 1-30, 31-67 and 99-126.</title>
        <authorList>
            <person name="Vesely D.L."/>
            <person name="Cornett L.E."/>
            <person name="MacLeod S.L."/>
            <person name="Nash A.A."/>
            <person name="Norris J.S."/>
        </authorList>
    </citation>
    <scope>FUNCTION (LONG-ACTING NATRIURETIC PEPTIDE; VESSEL DILATOR AND ATRIAL NATRIURETIC PEPTIDE)</scope>
</reference>
<reference key="21">
    <citation type="journal article" date="1991" name="J. Biol. Chem.">
        <title>Extracellular domain-IgG fusion proteins for three human natriuretic peptide receptors. Hormone pharmacology and application to solid phase screening of synthetic peptide antisera.</title>
        <authorList>
            <person name="Bennett B.D."/>
            <person name="Bennett G.L."/>
            <person name="Vitangcol R.V."/>
            <person name="Jewett J.R."/>
            <person name="Burnier J."/>
            <person name="Henzel W."/>
            <person name="Lowe D.G."/>
        </authorList>
    </citation>
    <scope>RECEPTOR-BINDING (ATRIAL NATRIURETIC PEPTIDE)</scope>
</reference>
<reference key="22">
    <citation type="journal article" date="1991" name="Science">
        <title>Selective activation of the B natriuretic peptide receptor by C-type natriuretic peptide (CNP).</title>
        <authorList>
            <person name="Koller K.J."/>
            <person name="Lowe D.G."/>
            <person name="Bennett G.L."/>
            <person name="Minamino N."/>
            <person name="Kangawa K."/>
            <person name="Matsuo H."/>
            <person name="Goeddel D.V."/>
        </authorList>
    </citation>
    <scope>FUNCTION (ATRIAL NATRIURETIC PEPTIDE)</scope>
</reference>
<reference key="23">
    <citation type="journal article" date="1993" name="Hypertension">
        <title>Urodilatin binds to and activates renal receptors for atrial natriuretic peptide.</title>
        <authorList>
            <person name="Valentin J.P."/>
            <person name="Sechi L.A."/>
            <person name="Qui C."/>
            <person name="Schambelan M."/>
            <person name="Humphreys M.H."/>
        </authorList>
    </citation>
    <scope>FUNCTION (ATRIAL NATRIURETIC PEPTIDE AND URODILATIN)</scope>
    <scope>TISSUE SPECIFICITY (ATRIAL NATRIURETIC PEPTIDE AND URODILATIN)</scope>
</reference>
<reference key="24">
    <citation type="journal article" date="1993" name="Pflugers Arch.">
        <title>Development and application of a urodilatin (CDD/ANP-95-126)-specific radioimmunoassay.</title>
        <authorList>
            <person name="Drummer C."/>
            <person name="Fiedler F."/>
            <person name="Bub A."/>
            <person name="Kleefeld D."/>
            <person name="Dimitriades E."/>
            <person name="Gerzer R."/>
            <person name="Forssmann W.G."/>
        </authorList>
    </citation>
    <scope>SYNTHESIS (URODILATIN)</scope>
    <scope>FUNCTION (URODILATIN)</scope>
    <scope>SUBCELLULAR LOCATION (ATRIAL NATRIURETIC PEPTIDE AND URODILATIN)</scope>
    <scope>TISSUE SPECIFICITY (ATRIAL NATRIURETIC PEPTIDE AND URODILATIN)</scope>
    <scope>PROTEOLYTIC PROCESSING (URODILATIN)</scope>
</reference>
<reference key="25">
    <citation type="journal article" date="1994" name="Circulation">
        <title>Three peptides from the atrial natriuretic factor prohormone amino terminus lower blood pressure and produce diuresis, natriuresis, and/or kaliuresis in humans.</title>
        <authorList>
            <person name="Vesely D.L."/>
            <person name="Douglass M.A."/>
            <person name="Dietz J.R."/>
            <person name="Gower W.R. Jr."/>
            <person name="McCormick M.T."/>
            <person name="Rodriguez-Paz G."/>
            <person name="Schocken D.D."/>
        </authorList>
    </citation>
    <scope>SYNTHESIS (LONG-ACTING NATRIURETIC PEPTIDE; VESSEL DILATOR; KALIURETIC PEPTIDE AND ATRIAL NATRIURETIC PEPTIDE)</scope>
    <scope>FUNCTION (LONG-ACTING NATRIURETIC PEPTIDE; VESSEL DILATOR; KALIURETIC PEPTIDE AND ATRIAL NATRIURETIC PEPTIDE)</scope>
</reference>
<reference key="26">
    <citation type="journal article" date="1994" name="Clin. Sci.">
        <title>N-terminal atrial natriuretic peptide and atrial natriuretic peptide in human plasma: investigation of plasma levels and molecular circulating form(s) using radioimmunoassays for pro-atrial natriuretic peptide (31-67), pro-atrial natriuretic peptide (1-30) and atrial natriuretic peptide (99-126).</title>
        <authorList>
            <person name="Buckley M.G."/>
            <person name="Markandu N.D."/>
            <person name="Sagnella G.A."/>
            <person name="MacGregor G.A."/>
        </authorList>
    </citation>
    <scope>SYNTHESIS (LONG-ACTING NATRIURETIC PEPTIDE; VESSEL DILATOR AND ATRIAL NATRIURETIC PEPTIDE)</scope>
    <scope>FUNCTION (LONG-ACTING NATRIURETIC PEPTIDE AND VESSEL DILATOR)</scope>
    <scope>SUBCELLULAR LOCATION (LONG-ACTING NATRIURETIC PEPTIDE; VESSEL DILATOR AND ATRIAL NATRIURETIC PEPTIDE)</scope>
    <scope>PROTEOLYTIC PROCESSING</scope>
</reference>
<reference key="27">
    <citation type="journal article" date="1994" name="Peptides">
        <title>Molecular forms of circulating atrial natriuretic peptides in human plasma and their metabolites.</title>
        <authorList>
            <person name="Gower W.R. Jr."/>
            <person name="Chiou S."/>
            <person name="Skolnick K.A."/>
            <person name="Vesely D.L."/>
        </authorList>
    </citation>
    <scope>SYNTHESIS (LONG-ACTING NATRIURETIC PEPTIDE; VESSEL DILATOR; KALIURETIC PEPTIDE AND ATRIAL NATRIURETIC PEPTIDE)</scope>
    <scope>SUBCELLULAR LOCATION (LONG-ACTING NATRIURETIC PEPTIDE; VESSEL DILATOR; KALIURETIC PEPTIDE AND ATRIAL NATRIURETIC PEPTIDE)</scope>
    <scope>TISSUE SPECIFICITY (ATRIAL NATRIURETIC PEPTIDE)</scope>
    <scope>PROTEOLYTIC PROCESSING</scope>
</reference>
<reference key="28">
    <citation type="journal article" date="1994" name="Regul. Pept.">
        <title>Lack of biologic activity or specific binding of amino-terminal pro-ANP segments in the rat.</title>
        <authorList>
            <person name="Weir M.L."/>
            <person name="Honrath U."/>
            <person name="Flynn T.G."/>
            <person name="Sonnenberg H."/>
        </authorList>
    </citation>
    <scope>FUNCTION (VESSEL DILATOR)</scope>
</reference>
<reference key="29">
    <citation type="journal article" date="1995" name="Chronobiol. Int.">
        <title>Temporal (circadian) and functional relationship between atrial natriuretic peptides and blood pressure.</title>
        <authorList>
            <person name="Sothern R.B."/>
            <person name="Vesely D.L."/>
            <person name="Kanabrocki E.L."/>
            <person name="Hermida R.C."/>
            <person name="Bremner F.W."/>
            <person name="Third J.L."/>
            <person name="Boles M.A."/>
            <person name="Nemchausky B.M."/>
            <person name="Olwin J.H."/>
            <person name="Scheving L.E."/>
        </authorList>
    </citation>
    <scope>FUNCTION (LONG-ACTING NATRIURETIC PEPTIDE; VESSEL DILATOR AND ATRIAL NATRIURETIC PEPTIDE)</scope>
    <scope>SUBCELLULAR LOCATION (LONG-ACTING NATRIURETIC PEPTIDE; VESSEL DILATOR AND ATRIAL NATRIURETIC PEPTIDE)</scope>
</reference>
<reference key="30">
    <citation type="journal article" date="1995" name="Endocrinology">
        <title>Kaliuretic peptide: the most potent inhibitor of Na(+)-K+ ATPase of the atrial natriuretic peptides.</title>
        <authorList>
            <person name="Chiou S."/>
            <person name="Vesely D.L."/>
        </authorList>
    </citation>
    <scope>SYNTHESIS (LONG-ACTING NATRIURETIC PEPTIDE; VESSEL DILATOR; KALIURETIC PEPTIDE AND ATRIAL NATRIURETIC PEPTIDE)</scope>
    <scope>FUNCTION (LONG-ACTING NATRIURETIC PEPTIDE; VESSEL DILATOR; KALIURETIC PEPTIDE AND ATRIAL NATRIURETIC PEPTIDE)</scope>
</reference>
<reference key="31">
    <citation type="journal article" date="1995" name="J. Endocrinol.">
        <title>Kaliuretic peptide and long acting natriuretic peptide as well as atrial natriuretic factor inhibit aldosterone secretion.</title>
        <authorList>
            <person name="Vesely D.L."/>
            <person name="Chiou S."/>
            <person name="Douglass M.A."/>
            <person name="McCormick M.T."/>
            <person name="Rodriguez-Paz G."/>
            <person name="Schocken D.D."/>
        </authorList>
    </citation>
    <scope>SYNTHESIS (LONG-ACTING NATRIURETIC PEPTIDE; VESSEL DILATOR; KALIURETIC PEPTIDE AND ATRIAL NATRIURETIC PEPTIDE)</scope>
    <scope>FUNCTION (LONG-ACTING NATRIURETIC PEPTIDE; VESSEL DILATOR; KALIURETIC PEPTIDE AND ATRIAL NATRIURETIC PEPTIDE)</scope>
</reference>
<reference key="32">
    <citation type="journal article" date="1996" name="Am. J. Physiol.">
        <title>Postprandial natriuresis in humans: further evidence that urodilatin, not ANP, modulates sodium excretion.</title>
        <authorList>
            <person name="Drummer C."/>
            <person name="Franck W."/>
            <person name="Heer M."/>
            <person name="Forssmann W.G."/>
            <person name="Gerzer R."/>
            <person name="Goetz K."/>
        </authorList>
    </citation>
    <scope>FUNCTION (URODILATIN)</scope>
    <scope>SUBCELLULAR LOCATION (ATRIAL NATRIURETIC PEPTIDE AND URODILATIN)</scope>
    <scope>TISSUE SPECIFICITY (URODILATIN)</scope>
</reference>
<reference key="33">
    <citation type="journal article" date="1996" name="Am. J. Physiol.">
        <title>Urodilatin is involved in sodium homeostasis and exerts sodium-state-dependent natriuretic and diuretic effects.</title>
        <authorList>
            <person name="Meyer M."/>
            <person name="Richter R."/>
            <person name="Brunkhorst R."/>
            <person name="Wrenger E."/>
            <person name="Schulz-Knappe P."/>
            <person name="Kist A."/>
            <person name="Mentz P."/>
            <person name="Brabant E.G."/>
            <person name="Koch K.M."/>
            <person name="Rechkemmer G."/>
            <person name="Forssmann W.G."/>
        </authorList>
    </citation>
    <scope>FUNCTION (URODILATIN)</scope>
    <scope>SUBCELLULAR LOCATION (URODILATIN)</scope>
</reference>
<reference key="34">
    <citation type="journal article" date="1998" name="Nephrol. Dial. Transplant.">
        <title>The renal natriuretic peptide urodilatin is present in human kidney.</title>
        <authorList>
            <person name="Herten M."/>
            <person name="Lenz W."/>
            <person name="Gerzer R."/>
            <person name="Drummer C."/>
        </authorList>
    </citation>
    <scope>SUBCELLULAR LOCATION (URODILATIN)</scope>
    <scope>TISSUE SPECIFICITY (ATRIAL NATRIURETIC PEPTIDE AND URODILATIN)</scope>
    <scope>PROTEOLYTIC PROCESSING (URODILATIN)</scope>
</reference>
<reference key="35">
    <citation type="journal article" date="1999" name="Kidney Int.">
        <title>Regulation of natriuretic peptide (urodilatin) release in a human kidney cell line.</title>
        <authorList>
            <person name="Lenz W."/>
            <person name="Herten M."/>
            <person name="Gerzer R."/>
            <person name="Drummer C."/>
        </authorList>
    </citation>
    <scope>FUNCTION (URODILATIN AND ATRIAL NATRIURETIC PEPTIDE)</scope>
    <scope>SUBCELLULAR LOCATION (URODILATIN AND ATRIAL NATRIURETIC PEPTIDE)</scope>
</reference>
<reference key="36">
    <citation type="journal article" date="2000" name="Metabolism">
        <title>Long-acting natriuretic peptide, vessel dilator, and kaliuretic peptide enhance the urinary excretion rate of beta2-microglobulin.</title>
        <authorList>
            <person name="Vesely D.L."/>
            <person name="Perez-Lamboy G.I."/>
            <person name="Schocken D.D."/>
        </authorList>
    </citation>
    <scope>FUNCTION (LONG-ACTING NATRIURETIC PEPTIDE; VESSEL DILATOR AND KALIURETIC PEPTIDE)</scope>
</reference>
<reference key="37">
    <citation type="journal article" date="2000" name="Proc. Natl. Acad. Sci. U.S.A.">
        <title>Corin, a transmembrane cardiac serine protease, acts as a pro-atrial natriuretic peptide-converting enzyme.</title>
        <authorList>
            <person name="Yan W."/>
            <person name="Wu F."/>
            <person name="Morser J."/>
            <person name="Wu Q."/>
        </authorList>
    </citation>
    <scope>PROTEOLYTIC PROCESSING</scope>
    <scope>CLEAVAGE SITE</scope>
    <scope>MUTAGENESIS OF ARG-123</scope>
</reference>
<reference key="38">
    <citation type="journal article" date="2003" name="J. Biol. Chem.">
        <title>Functional analysis of the transmembrane domain and activation cleavage of human corin: design and characterization of a soluble corin.</title>
        <authorList>
            <person name="Knappe S."/>
            <person name="Wu F."/>
            <person name="Masikat M.R."/>
            <person name="Morser J."/>
            <person name="Wu Q."/>
        </authorList>
    </citation>
    <scope>PROTEOLYTIC PROCESSING</scope>
</reference>
<reference key="39">
    <citation type="journal article" date="2005" name="J. Clin. Endocrinol. Metab.">
        <title>Lipid mobilization with physiological atrial natriuretic peptide concentrations in humans.</title>
        <authorList>
            <person name="Birkenfeld A.L."/>
            <person name="Boschmann M."/>
            <person name="Moro C."/>
            <person name="Adams F."/>
            <person name="Heusser K."/>
            <person name="Franke G."/>
            <person name="Berlan M."/>
            <person name="Luft F.C."/>
            <person name="Lafontan M."/>
            <person name="Jordan J."/>
        </authorList>
    </citation>
    <scope>FUNCTION (ATRIAL NATRIURETIC PEPTIDE)</scope>
    <scope>SUBCELLULAR LOCATION (ATRIAL NATRIURETIC PEPTIDE)</scope>
</reference>
<reference key="40">
    <citation type="journal article" date="2006" name="Clin. Chem.">
        <title>Dipeptidyl-peptidase IV converts intact B-type natriuretic peptide into its des-SerPro form.</title>
        <authorList>
            <person name="Brandt I."/>
            <person name="Lambeir A.M."/>
            <person name="Ketelslegers J.M."/>
            <person name="Vanderheyden M."/>
            <person name="Scharpe S."/>
            <person name="De Meester I."/>
        </authorList>
    </citation>
    <scope>PROTEOLYTIC PROCESSING BY MME (ATRIAL NATRIURETIC PEPTIDE)</scope>
</reference>
<reference key="41">
    <citation type="journal article" date="2006" name="J. Am. Coll. Cardiol.">
        <title>Association of atrial natriuretic peptide and type a natriuretic peptide receptor gene polymorphisms with left ventricular mass in human essential hypertension.</title>
        <authorList>
            <person name="Rubattu S."/>
            <person name="Bigatti G."/>
            <person name="Evangelista A."/>
            <person name="Lanzani C."/>
            <person name="Stanzione R."/>
            <person name="Zagato L."/>
            <person name="Manunta P."/>
            <person name="Marchitti S."/>
            <person name="Venturelli V."/>
            <person name="Bianchi G."/>
            <person name="Volpe M."/>
            <person name="Stella P."/>
        </authorList>
    </citation>
    <scope>FUNCTION (ATRIAL NATRIURETIC PEPTIDE)</scope>
    <scope>VARIANT ARG-ARG-151 EXT</scope>
</reference>
<reference key="42">
    <citation type="journal article" date="2008" name="Diabetes">
        <title>Atrial natriuretic peptide induces postprandial lipid oxidation in humans.</title>
        <authorList>
            <person name="Birkenfeld A.L."/>
            <person name="Budziarek P."/>
            <person name="Boschmann M."/>
            <person name="Moro C."/>
            <person name="Adams F."/>
            <person name="Franke G."/>
            <person name="Berlan M."/>
            <person name="Marques M.A."/>
            <person name="Sweep F.C."/>
            <person name="Luft F.C."/>
            <person name="Lafontan M."/>
            <person name="Jordan J."/>
        </authorList>
    </citation>
    <scope>FUNCTION (ATRIAL NATRIURETIC PEPTIDE)</scope>
    <scope>SUBCELLULAR LOCATION (ATRIAL NATRIURETIC PEPTIDE)</scope>
</reference>
<reference key="43">
    <citation type="journal article" date="2011" name="Biochem. Biophys. Res. Commun.">
        <title>Atrial natriuretic peptide regulates lipid mobilization and oxygen consumption in human adipocytes by activating AMPK.</title>
        <authorList>
            <person name="Souza S.C."/>
            <person name="Chau M.D."/>
            <person name="Yang Q."/>
            <person name="Gauthier M.S."/>
            <person name="Clairmont K.B."/>
            <person name="Wu Z."/>
            <person name="Gromada J."/>
            <person name="Dole W.P."/>
        </authorList>
    </citation>
    <scope>FUNCTION (ATRIAL NATRIURETIC PEPTIDE)</scope>
    <scope>TISSUE SPECIFICITY (ATRIAL NATRIURETIC PEPTIDE)</scope>
</reference>
<reference key="44">
    <citation type="journal article" date="2012" name="Clin. Chem.">
        <title>First identification of circulating prepro-A-type natriuretic peptide (preproANP) signal peptide fragments in humans: initial assessment as cardiovascular biomarkers.</title>
        <authorList>
            <person name="Pemberton C.J."/>
            <person name="Siriwardena M."/>
            <person name="Kleffmann T."/>
            <person name="Ruygrok P."/>
            <person name="Palmer S.C."/>
            <person name="Yandle T.G."/>
            <person name="Richards A.M."/>
        </authorList>
    </citation>
    <scope>TISSUE SPECIFICITY (ATRIAL NATRIURETIC PEPTIDE)</scope>
</reference>
<reference key="45">
    <citation type="journal article" date="2012" name="J. Clin. Invest.">
        <title>Cardiac natriuretic peptides act via p38 MAPK to induce the brown fat thermogenic program in mouse and human adipocytes.</title>
        <authorList>
            <person name="Bordicchia M."/>
            <person name="Liu D."/>
            <person name="Amri E.Z."/>
            <person name="Ailhaud G."/>
            <person name="Dessi-Fulgheri P."/>
            <person name="Zhang C."/>
            <person name="Takahashi N."/>
            <person name="Sarzani R."/>
            <person name="Collins S."/>
        </authorList>
    </citation>
    <scope>FUNCTION (ATRIAL NATRIURETIC PEPTIDE)</scope>
</reference>
<reference key="46">
    <citation type="journal article" date="2014" name="PLoS ONE">
        <title>The C2238/alphaANP variant is a negative modulator of both viability and function of coronary artery smooth muscle cells.</title>
        <authorList>
            <person name="Rubattu S."/>
            <person name="Marchitti S."/>
            <person name="Bianchi F."/>
            <person name="Di Castro S."/>
            <person name="Stanzione R."/>
            <person name="Cotugno M."/>
            <person name="Bozzao C."/>
            <person name="Sciarretta S."/>
            <person name="Volpe M."/>
        </authorList>
    </citation>
    <scope>FUNCTION (ATRIAL NATRIURETIC PEPTIDE)</scope>
</reference>
<reference key="47">
    <citation type="journal article" date="2018" name="Front. Neurosci.">
        <title>Natriuretic Peptides in Post-mortem Brain Tissue and Cerebrospinal Fluid of Non-demented Humans and Alzheimer's Disease Patients.</title>
        <authorList>
            <person name="Mahinrad S."/>
            <person name="Bulk M."/>
            <person name="van der Velpen I."/>
            <person name="Mahfouz A."/>
            <person name="van Roon-Mom W."/>
            <person name="Fedarko N."/>
            <person name="Yasar S."/>
            <person name="Sabayan B."/>
            <person name="van Heemst D."/>
            <person name="van der Weerd L."/>
        </authorList>
    </citation>
    <scope>SUBCELLULAR LOCATION (ATRIAL NATRIURETIC PEPTIDE)</scope>
    <scope>TISSUE SPECIFICITY (ATRIAL NATRIURETIC PEPTIDE)</scope>
</reference>
<reference key="48">
    <citation type="journal article" date="1994" name="Biochemistry">
        <title>Solution conformation of an atrial natriuretic peptide variant selective for the type A receptor.</title>
        <authorList>
            <person name="Fairbrother W.J."/>
            <person name="McDowell R.S."/>
            <person name="Cunningham B.C."/>
        </authorList>
    </citation>
    <scope>STRUCTURE BY NMR OF 124-151 MUTANT SELECTIVE FOR NPR-C RECEPTOR</scope>
</reference>
<reference key="49">
    <citation type="journal article" date="2006" name="J. Mol. Biol.">
        <title>Structural determinants of natriuretic peptide receptor specificity and degeneracy.</title>
        <authorList>
            <person name="He X.-L."/>
            <person name="Dukkipati A."/>
            <person name="Garcia K.C."/>
        </authorList>
    </citation>
    <scope>X-RAY CRYSTALLOGRAPHY (2.40 ANGSTROMS) OF 129-149 IN COMPLEX WITH NPR3</scope>
    <scope>DISULFIDE BOND</scope>
</reference>
<reference evidence="64" key="50">
    <citation type="journal article" date="2011" name="J. Biol. Chem.">
        <title>Insulin-degrading enzyme modulates the natriuretic peptide-mediated signaling response.</title>
        <authorList>
            <person name="Ralat L.A."/>
            <person name="Guo Q."/>
            <person name="Ren M."/>
            <person name="Funke T."/>
            <person name="Dickey D.M."/>
            <person name="Potter L.R."/>
            <person name="Tang W.J."/>
        </authorList>
    </citation>
    <scope>X-RAY CRYSTALLOGRAPHY (3.03 ANGSTROMS) OF 124-151</scope>
    <scope>FUNCTION (ATRIAL NATRIURETIC PEPTIDE)</scope>
    <scope>PROTEOLYTIC DEGRADATION BY IDE (ATRIAL NATRIURETIC PEPTIDE AND URODILATIN)</scope>
    <scope>REGION</scope>
    <scope>MUTAGENESIS OF 124-SER--ARG-126; 124-SER--SER-129 AND 147-ASN--TYR-151</scope>
</reference>
<reference key="51">
    <citation type="journal article" date="2008" name="N. Engl. J. Med.">
        <title>Atrial natriuretic peptide frameshift mutation in familial atrial fibrillation.</title>
        <authorList>
            <person name="Hodgson-Zingman D.M."/>
            <person name="Karst M.L."/>
            <person name="Zingman L.V."/>
            <person name="Heublein D.M."/>
            <person name="Darbar D."/>
            <person name="Herron K.J."/>
            <person name="Ballew J.D."/>
            <person name="de Andrade M."/>
            <person name="Burnett J.C. Jr."/>
            <person name="Olson T.M."/>
        </authorList>
    </citation>
    <scope>INVOLVEMENT IN ATFB6</scope>
</reference>
<reference key="52">
    <citation type="journal article" date="2013" name="Circ. Cardiovasc. Genet.">
        <title>Autosomal recessive atrial dilated cardiomyopathy with standstill evolution associated with mutation of natriuretic peptide precursor A.</title>
        <authorList>
            <person name="Disertori M."/>
            <person name="Quintarelli S."/>
            <person name="Grasso M."/>
            <person name="Pilotto A."/>
            <person name="Narula N."/>
            <person name="Favalli V."/>
            <person name="Canclini C."/>
            <person name="Diegoli M."/>
            <person name="Mazzola S."/>
            <person name="Marini M."/>
            <person name="Del Greco M."/>
            <person name="Bonmassari R."/>
            <person name="Mase M."/>
            <person name="Ravelli F."/>
            <person name="Specchia C."/>
            <person name="Arbustini E."/>
        </authorList>
    </citation>
    <scope>INVOLVEMENT IN ATRST2</scope>
    <scope>VARIANT ATRST2 GLN-150</scope>
</reference>
<evidence type="ECO:0000250" key="1">
    <source>
        <dbReference type="UniProtKB" id="P01161"/>
    </source>
</evidence>
<evidence type="ECO:0000250" key="2">
    <source>
        <dbReference type="UniProtKB" id="P05125"/>
    </source>
</evidence>
<evidence type="ECO:0000250" key="3">
    <source>
        <dbReference type="UniProtKB" id="P24259"/>
    </source>
</evidence>
<evidence type="ECO:0000256" key="4">
    <source>
        <dbReference type="SAM" id="MobiDB-lite"/>
    </source>
</evidence>
<evidence type="ECO:0000269" key="5">
    <source>
    </source>
</evidence>
<evidence type="ECO:0000269" key="6">
    <source>
    </source>
</evidence>
<evidence type="ECO:0000269" key="7">
    <source>
    </source>
</evidence>
<evidence type="ECO:0000269" key="8">
    <source>
    </source>
</evidence>
<evidence type="ECO:0000269" key="9">
    <source>
    </source>
</evidence>
<evidence type="ECO:0000269" key="10">
    <source>
    </source>
</evidence>
<evidence type="ECO:0000269" key="11">
    <source>
    </source>
</evidence>
<evidence type="ECO:0000269" key="12">
    <source>
    </source>
</evidence>
<evidence type="ECO:0000269" key="13">
    <source>
    </source>
</evidence>
<evidence type="ECO:0000269" key="14">
    <source>
    </source>
</evidence>
<evidence type="ECO:0000269" key="15">
    <source>
    </source>
</evidence>
<evidence type="ECO:0000269" key="16">
    <source>
    </source>
</evidence>
<evidence type="ECO:0000269" key="17">
    <source>
    </source>
</evidence>
<evidence type="ECO:0000269" key="18">
    <source>
    </source>
</evidence>
<evidence type="ECO:0000269" key="19">
    <source>
    </source>
</evidence>
<evidence type="ECO:0000269" key="20">
    <source>
    </source>
</evidence>
<evidence type="ECO:0000269" key="21">
    <source>
    </source>
</evidence>
<evidence type="ECO:0000269" key="22">
    <source>
    </source>
</evidence>
<evidence type="ECO:0000269" key="23">
    <source>
    </source>
</evidence>
<evidence type="ECO:0000269" key="24">
    <source>
    </source>
</evidence>
<evidence type="ECO:0000269" key="25">
    <source>
    </source>
</evidence>
<evidence type="ECO:0000269" key="26">
    <source>
    </source>
</evidence>
<evidence type="ECO:0000269" key="27">
    <source>
    </source>
</evidence>
<evidence type="ECO:0000269" key="28">
    <source>
    </source>
</evidence>
<evidence type="ECO:0000269" key="29">
    <source>
    </source>
</evidence>
<evidence type="ECO:0000269" key="30">
    <source>
    </source>
</evidence>
<evidence type="ECO:0000269" key="31">
    <source>
    </source>
</evidence>
<evidence type="ECO:0000269" key="32">
    <source>
    </source>
</evidence>
<evidence type="ECO:0000269" key="33">
    <source>
    </source>
</evidence>
<evidence type="ECO:0000269" key="34">
    <source>
    </source>
</evidence>
<evidence type="ECO:0000269" key="35">
    <source>
    </source>
</evidence>
<evidence type="ECO:0000269" key="36">
    <source>
    </source>
</evidence>
<evidence type="ECO:0000269" key="37">
    <source>
    </source>
</evidence>
<evidence type="ECO:0000269" key="38">
    <source>
    </source>
</evidence>
<evidence type="ECO:0000269" key="39">
    <source>
    </source>
</evidence>
<evidence type="ECO:0000269" key="40">
    <source>
    </source>
</evidence>
<evidence type="ECO:0000269" key="41">
    <source>
    </source>
</evidence>
<evidence type="ECO:0000269" key="42">
    <source>
    </source>
</evidence>
<evidence type="ECO:0000269" key="43">
    <source>
    </source>
</evidence>
<evidence type="ECO:0000269" key="44">
    <source>
    </source>
</evidence>
<evidence type="ECO:0000269" key="45">
    <source>
    </source>
</evidence>
<evidence type="ECO:0000303" key="46">
    <source>
    </source>
</evidence>
<evidence type="ECO:0000303" key="47">
    <source>
    </source>
</evidence>
<evidence type="ECO:0000303" key="48">
    <source>
    </source>
</evidence>
<evidence type="ECO:0000303" key="49">
    <source>
    </source>
</evidence>
<evidence type="ECO:0000303" key="50">
    <source>
    </source>
</evidence>
<evidence type="ECO:0000303" key="51">
    <source>
    </source>
</evidence>
<evidence type="ECO:0000303" key="52">
    <source>
    </source>
</evidence>
<evidence type="ECO:0000303" key="53">
    <source>
    </source>
</evidence>
<evidence type="ECO:0000303" key="54">
    <source>
    </source>
</evidence>
<evidence type="ECO:0000303" key="55">
    <source>
    </source>
</evidence>
<evidence type="ECO:0000303" key="56">
    <source>
    </source>
</evidence>
<evidence type="ECO:0000303" key="57">
    <source>
    </source>
</evidence>
<evidence type="ECO:0000303" key="58">
    <source>
    </source>
</evidence>
<evidence type="ECO:0000305" key="59"/>
<evidence type="ECO:0000305" key="60">
    <source>
    </source>
</evidence>
<evidence type="ECO:0000305" key="61">
    <source>
    </source>
</evidence>
<evidence type="ECO:0000305" key="62">
    <source>
    </source>
</evidence>
<evidence type="ECO:0000305" key="63">
    <source>
    </source>
</evidence>
<evidence type="ECO:0007744" key="64">
    <source>
        <dbReference type="PDB" id="3N57"/>
    </source>
</evidence>
<evidence type="ECO:0007829" key="65">
    <source>
        <dbReference type="PDB" id="1YK0"/>
    </source>
</evidence>
<evidence type="ECO:0007829" key="66">
    <source>
        <dbReference type="PDB" id="7BRH"/>
    </source>
</evidence>
<gene>
    <name type="primary">NPPA</name>
    <name type="synonym">ANP</name>
    <name type="synonym">PND</name>
</gene>
<organism>
    <name type="scientific">Homo sapiens</name>
    <name type="common">Human</name>
    <dbReference type="NCBI Taxonomy" id="9606"/>
    <lineage>
        <taxon>Eukaryota</taxon>
        <taxon>Metazoa</taxon>
        <taxon>Chordata</taxon>
        <taxon>Craniata</taxon>
        <taxon>Vertebrata</taxon>
        <taxon>Euteleostomi</taxon>
        <taxon>Mammalia</taxon>
        <taxon>Eutheria</taxon>
        <taxon>Euarchontoglires</taxon>
        <taxon>Primates</taxon>
        <taxon>Haplorrhini</taxon>
        <taxon>Catarrhini</taxon>
        <taxon>Hominidae</taxon>
        <taxon>Homo</taxon>
    </lineage>
</organism>